<proteinExistence type="evidence at protein level"/>
<comment type="function">
    <text evidence="11 16">Interlinks intermediate filaments with microtubules and microfilaments and anchors intermediate filaments to desmosomes or hemidesmosomes. Could also bind muscle proteins such as actin to membrane complexes in muscle. May be involved not only in the filaments network, but also in the regulation of their dynamics. Structural component of muscle. Isoform 9 plays a major role in the maintenance of myofiber integrity.</text>
</comment>
<comment type="subunit">
    <text evidence="1 2 4 11 13 14 17">Homodimer or homotetramer. Interacts (via actin-binding domain) with SYNE3. Interacts (via calponin-homology (CH) 1 domain) with VIM (via rod region) (By similarity). Interacts (via N-terminus) with DST isoform 2 (via N-terminus) (PubMed:19932097). Interacts with FER. Interacts with TOR1A (PubMed:18827015). Interacts with ANK3 (PubMed:21223964). Identified in complexes that contain VIM, EZR, AHNAK, BFSP1, BFSP2, ANK2, PLEC, PRX and spectrin (By similarity). Interacts with COL17A1 (PubMed:12482924).</text>
</comment>
<comment type="subunit">
    <molecule>Isoform 2</molecule>
    <text evidence="19">Interacts with KRT14, heterodimers consisting of KRT8 and KRT18, heterodimers consisting of KRT5 and KRT14, heterodimers consisting of KRT14 and KRT15, and heterodimers consisting of KRT1 and KRT10 (PubMed:24940650). Interacts with DES and VIM (PubMed:24940650).</text>
</comment>
<comment type="interaction">
    <interactant intactId="EBI-297903">
        <id>Q15149</id>
    </interactant>
    <interactant intactId="EBI-400434">
        <id>P35637</id>
        <label>FUS</label>
    </interactant>
    <organismsDiffer>false</organismsDiffer>
    <experiments>4</experiments>
</comment>
<comment type="interaction">
    <interactant intactId="EBI-297903">
        <id>Q15149</id>
    </interactant>
    <interactant intactId="EBI-466029">
        <id>P42858</id>
        <label>HTT</label>
    </interactant>
    <organismsDiffer>false</organismsDiffer>
    <experiments>4</experiments>
</comment>
<comment type="interaction">
    <interactant intactId="EBI-297903">
        <id>Q15149</id>
    </interactant>
    <interactant intactId="EBI-948678">
        <id>P16144</id>
        <label>ITGB4</label>
    </interactant>
    <organismsDiffer>false</organismsDiffer>
    <experiments>7</experiments>
</comment>
<comment type="interaction">
    <interactant intactId="EBI-297903">
        <id>Q15149</id>
    </interactant>
    <interactant intactId="EBI-751001">
        <id>Q14145</id>
        <label>KEAP1</label>
    </interactant>
    <organismsDiffer>false</organismsDiffer>
    <experiments>3</experiments>
</comment>
<comment type="interaction">
    <interactant intactId="EBI-297903">
        <id>Q15149</id>
    </interactant>
    <interactant intactId="EBI-702178">
        <id>P02533</id>
        <label>KRT14</label>
    </interactant>
    <organismsDiffer>false</organismsDiffer>
    <experiments>2</experiments>
</comment>
<comment type="subcellular location">
    <subcellularLocation>
        <location evidence="11">Cytoplasm</location>
        <location evidence="11">Cytoskeleton</location>
    </subcellularLocation>
    <subcellularLocation>
        <location evidence="11">Cell junction</location>
        <location evidence="11">Hemidesmosome</location>
    </subcellularLocation>
    <subcellularLocation>
        <location evidence="4">Cell projection</location>
        <location evidence="4">Podosome</location>
    </subcellularLocation>
    <text evidence="4">Localized to the cortex of myotube podosomes.</text>
</comment>
<comment type="alternative products">
    <event type="alternative splicing"/>
    <isoform>
        <id>Q15149-1</id>
        <name>1</name>
        <name>Plectin-6</name>
        <sequence type="displayed"/>
    </isoform>
    <isoform>
        <id>Q15149-2</id>
        <name>2</name>
        <name>Plectin-1</name>
        <name>1c</name>
        <sequence type="described" ref="VSP_005030"/>
    </isoform>
    <isoform>
        <id>Q15149-3</id>
        <name>3</name>
        <sequence type="described" ref="VSP_005030 VSP_005031"/>
    </isoform>
    <isoform>
        <id>Q15149-4</id>
        <name>4</name>
        <name>Plectin-11</name>
        <name>1a</name>
        <sequence type="described" ref="VSP_023510"/>
    </isoform>
    <isoform>
        <id>Q15149-5</id>
        <name>5</name>
        <name>Plectin-8</name>
        <name>1b</name>
        <sequence type="described" ref="VSP_037103 VSP_037106"/>
    </isoform>
    <isoform>
        <id>Q15149-6</id>
        <name>6</name>
        <name>Plectin-10</name>
        <name>1g</name>
        <sequence type="described" ref="VSP_037104 VSP_037105"/>
    </isoform>
    <isoform>
        <id>Q15149-7</id>
        <name>7</name>
        <name>Plectin-7</name>
        <name>1d</name>
        <sequence type="described" ref="VSP_037100 VSP_037109"/>
    </isoform>
    <isoform>
        <id>Q15149-8</id>
        <name>8</name>
        <name>Plectin-3</name>
        <name>1e</name>
        <sequence type="described" ref="VSP_037101 VSP_037108"/>
    </isoform>
    <isoform>
        <id>Q15149-9</id>
        <name>9</name>
        <name>Plectin-2</name>
        <name>1f</name>
        <sequence type="described" ref="VSP_037102 VSP_037107"/>
    </isoform>
</comment>
<comment type="tissue specificity">
    <text>Widely expressed with highest levels in muscle, heart, placenta and spinal cord.</text>
</comment>
<comment type="domain">
    <text>The N-terminus interacts with actin, the C-terminus with vimentin, desmin, GFAP, cytokeratins, lamin B; whereas both the N- and the C-terminus can bind integrin beta-4.</text>
</comment>
<comment type="PTM">
    <text evidence="1">Phosphorylated by CDK1; regulates dissociation from intermediate filaments during mitosis.</text>
</comment>
<comment type="disease" evidence="12 15">
    <disease id="DI-01532">
        <name>Epidermolysis bullosa simplex 5C, with pyloric atresia</name>
        <acronym>EBS5C</acronym>
        <description>A form of epidermolysis bullosa, a genodermatosis characterized by recurrent blistering, fragility of the skin and mucosal epithelia, and erosions caused by minor mechanical trauma. EBS5C is an autosomal recessive disorder characterized by severe skin blistering at birth and congenital pyloric atresia. Death usually occurs in infancy.</description>
        <dbReference type="MIM" id="612138"/>
    </disease>
    <text>The disease is caused by variants affecting the gene represented in this entry.</text>
</comment>
<comment type="disease" evidence="9 15 18 25">
    <disease id="DI-00468">
        <name>Epidermolysis bullosa simplex 5B, with muscular dystrophy</name>
        <acronym>EBS5B</acronym>
        <description>A form of epidermolysis bullosa, a genodermatosis characterized by recurrent blistering, fragility of the skin and mucosal epithelia, and erosions caused by minor mechanical trauma. EBS5B is an autosomal recessive disorder characterized by progressive muscular dystrophy associated with generalized skin blistering.</description>
        <dbReference type="MIM" id="226670"/>
    </disease>
    <text>The disease is caused by variants affecting the gene represented in this entry.</text>
</comment>
<comment type="disease" evidence="10">
    <disease id="DI-00464">
        <name>Epidermolysis bullosa simplex 5A, Ogna type</name>
        <acronym>EBS5A</acronym>
        <description>An autosomal dominant form of epidermolysis bullosa, a genodermatosis characterized by recurrent blistering, fragility of the skin and mucosal epithelia, and erosions caused by minor mechanical trauma. EBS5A patients manifest generalized skin bruising, skin fragility with non-scarring blistering and small hemorrhagic blisters on hands. At the ultrastructural level, EBS5A is differentiated from classical epidermolysis bullosa simplex, by the occurrence of blisters originating in basal cells above hemidesmosomes, and abnormal hemidesmosome intracellular attachment plates.</description>
        <dbReference type="MIM" id="131950"/>
    </disease>
    <text>The disease is caused by variants affecting the gene represented in this entry.</text>
</comment>
<comment type="disease" evidence="16 20 23">
    <disease id="DI-03000">
        <name>Muscular dystrophy, limb-girdle, autosomal recessive 17</name>
        <acronym>LGMDR17</acronym>
        <description>A form of limb-girdle muscular dystrophy characterized by early childhood onset of proximal muscle weakness. Limb-girdle muscular dystrophies are characterized by proximal weakness, weakness of the hip and shoulder girdles and prominent asymmetrical quadriceps femoris and biceps brachii atrophy.</description>
        <dbReference type="MIM" id="613723"/>
    </disease>
    <text>The disease is caused by variants affecting the gene represented in this entry. A 9 bp deletion containing the initiation codon in exon 1f of PLEC have been found in limb-girdle muscular dystrophy patients. The mutation results in deficient expression of isoform 9 and disorganization of the myofibers, without any effect on the skin.</text>
</comment>
<comment type="disease" evidence="21">
    <disease id="DI-04492">
        <name>Epidermolysis bullosa simplex 5D, generalized intermediate, autosomal recessive</name>
        <acronym>EBS5D</acronym>
        <description>A form of epidermolysis bullosa, a genodermatosis characterized by recurrent blistering, fragility of the skin and mucosal epithelia, and erosions caused by minor mechanical trauma. EBS5D patients have generalized skin blistering that heals with scarring and hyperpigmentation, and severe nail dystrophy. Mucous membranes, heart, and muscle are spared.</description>
        <dbReference type="MIM" id="616487"/>
    </disease>
    <text>The disease is caused by variants affecting the gene represented in this entry.</text>
</comment>
<comment type="similarity">
    <text evidence="29">Belongs to the plakin or cytolinker family.</text>
</comment>
<comment type="online information" name="Wikipedia">
    <link uri="https://en.wikipedia.org/wiki/Plectin"/>
    <text>Plectin entry</text>
</comment>
<gene>
    <name type="primary">PLEC</name>
    <name type="synonym">PLEC1</name>
</gene>
<accession>Q15149</accession>
<accession>Q15148</accession>
<accession>Q16640</accession>
<accession>Q6S376</accession>
<accession>Q6S377</accession>
<accession>Q6S378</accession>
<accession>Q6S379</accession>
<accession>Q6S380</accession>
<accession>Q6S381</accession>
<accession>Q6S382</accession>
<accession>Q6S383</accession>
<organism>
    <name type="scientific">Homo sapiens</name>
    <name type="common">Human</name>
    <dbReference type="NCBI Taxonomy" id="9606"/>
    <lineage>
        <taxon>Eukaryota</taxon>
        <taxon>Metazoa</taxon>
        <taxon>Chordata</taxon>
        <taxon>Craniata</taxon>
        <taxon>Vertebrata</taxon>
        <taxon>Euteleostomi</taxon>
        <taxon>Mammalia</taxon>
        <taxon>Eutheria</taxon>
        <taxon>Euarchontoglires</taxon>
        <taxon>Primates</taxon>
        <taxon>Haplorrhini</taxon>
        <taxon>Catarrhini</taxon>
        <taxon>Hominidae</taxon>
        <taxon>Homo</taxon>
    </lineage>
</organism>
<name>PLEC_HUMAN</name>
<evidence type="ECO:0000250" key="1"/>
<evidence type="ECO:0000250" key="2">
    <source>
        <dbReference type="UniProtKB" id="P30427"/>
    </source>
</evidence>
<evidence type="ECO:0000250" key="3">
    <source>
        <dbReference type="UniProtKB" id="Q9JI55"/>
    </source>
</evidence>
<evidence type="ECO:0000250" key="4">
    <source>
        <dbReference type="UniProtKB" id="Q9QXS1"/>
    </source>
</evidence>
<evidence type="ECO:0000255" key="5"/>
<evidence type="ECO:0000255" key="6">
    <source>
        <dbReference type="PROSITE-ProRule" id="PRU00044"/>
    </source>
</evidence>
<evidence type="ECO:0000255" key="7">
    <source>
        <dbReference type="PROSITE-ProRule" id="PRU00192"/>
    </source>
</evidence>
<evidence type="ECO:0000256" key="8">
    <source>
        <dbReference type="SAM" id="MobiDB-lite"/>
    </source>
</evidence>
<evidence type="ECO:0000269" key="9">
    <source>
    </source>
</evidence>
<evidence type="ECO:0000269" key="10">
    <source>
    </source>
</evidence>
<evidence type="ECO:0000269" key="11">
    <source>
    </source>
</evidence>
<evidence type="ECO:0000269" key="12">
    <source>
    </source>
</evidence>
<evidence type="ECO:0000269" key="13">
    <source>
    </source>
</evidence>
<evidence type="ECO:0000269" key="14">
    <source>
    </source>
</evidence>
<evidence type="ECO:0000269" key="15">
    <source>
    </source>
</evidence>
<evidence type="ECO:0000269" key="16">
    <source>
    </source>
</evidence>
<evidence type="ECO:0000269" key="17">
    <source>
    </source>
</evidence>
<evidence type="ECO:0000269" key="18">
    <source>
    </source>
</evidence>
<evidence type="ECO:0000269" key="19">
    <source>
    </source>
</evidence>
<evidence type="ECO:0000269" key="20">
    <source>
    </source>
</evidence>
<evidence type="ECO:0000269" key="21">
    <source>
    </source>
</evidence>
<evidence type="ECO:0000269" key="22">
    <source>
    </source>
</evidence>
<evidence type="ECO:0000269" key="23">
    <source>
    </source>
</evidence>
<evidence type="ECO:0000269" key="24">
    <source>
    </source>
</evidence>
<evidence type="ECO:0000269" key="25">
    <source>
    </source>
</evidence>
<evidence type="ECO:0000269" key="26">
    <source ref="5"/>
</evidence>
<evidence type="ECO:0000303" key="27">
    <source>
    </source>
</evidence>
<evidence type="ECO:0000303" key="28">
    <source>
    </source>
</evidence>
<evidence type="ECO:0000305" key="29"/>
<evidence type="ECO:0007744" key="30">
    <source>
    </source>
</evidence>
<evidence type="ECO:0007744" key="31">
    <source>
    </source>
</evidence>
<evidence type="ECO:0007744" key="32">
    <source>
    </source>
</evidence>
<evidence type="ECO:0007744" key="33">
    <source>
    </source>
</evidence>
<evidence type="ECO:0007744" key="34">
    <source>
    </source>
</evidence>
<evidence type="ECO:0007744" key="35">
    <source>
    </source>
</evidence>
<evidence type="ECO:0007744" key="36">
    <source>
    </source>
</evidence>
<evidence type="ECO:0007744" key="37">
    <source>
    </source>
</evidence>
<evidence type="ECO:0007744" key="38">
    <source>
    </source>
</evidence>
<evidence type="ECO:0007744" key="39">
    <source>
    </source>
</evidence>
<evidence type="ECO:0007744" key="40">
    <source>
    </source>
</evidence>
<evidence type="ECO:0007829" key="41">
    <source>
        <dbReference type="PDB" id="1MB8"/>
    </source>
</evidence>
<evidence type="ECO:0007829" key="42">
    <source>
        <dbReference type="PDB" id="2N03"/>
    </source>
</evidence>
<evidence type="ECO:0007829" key="43">
    <source>
        <dbReference type="PDB" id="2ODU"/>
    </source>
</evidence>
<evidence type="ECO:0007829" key="44">
    <source>
        <dbReference type="PDB" id="2ODV"/>
    </source>
</evidence>
<evidence type="ECO:0007829" key="45">
    <source>
        <dbReference type="PDB" id="3PDY"/>
    </source>
</evidence>
<evidence type="ECO:0007829" key="46">
    <source>
        <dbReference type="PDB" id="3PE0"/>
    </source>
</evidence>
<evidence type="ECO:0007829" key="47">
    <source>
        <dbReference type="PDB" id="4GDO"/>
    </source>
</evidence>
<evidence type="ECO:0007829" key="48">
    <source>
        <dbReference type="PDB" id="4Q59"/>
    </source>
</evidence>
<evidence type="ECO:0007829" key="49">
    <source>
        <dbReference type="PDB" id="5J1F"/>
    </source>
</evidence>
<evidence type="ECO:0007829" key="50">
    <source>
        <dbReference type="PDB" id="5J1G"/>
    </source>
</evidence>
<evidence type="ECO:0007829" key="51">
    <source>
        <dbReference type="PDB" id="5J1H"/>
    </source>
</evidence>
<evidence type="ECO:0007829" key="52">
    <source>
        <dbReference type="PDB" id="5J1I"/>
    </source>
</evidence>
<keyword id="KW-0002">3D-structure</keyword>
<keyword id="KW-0007">Acetylation</keyword>
<keyword id="KW-0009">Actin-binding</keyword>
<keyword id="KW-0025">Alternative splicing</keyword>
<keyword id="KW-0965">Cell junction</keyword>
<keyword id="KW-0966">Cell projection</keyword>
<keyword id="KW-0175">Coiled coil</keyword>
<keyword id="KW-0963">Cytoplasm</keyword>
<keyword id="KW-0206">Cytoskeleton</keyword>
<keyword id="KW-0903">Direct protein sequencing</keyword>
<keyword id="KW-0225">Disease variant</keyword>
<keyword id="KW-0263">Epidermolysis bullosa</keyword>
<keyword id="KW-0947">Limb-girdle muscular dystrophy</keyword>
<keyword id="KW-0488">Methylation</keyword>
<keyword id="KW-0597">Phosphoprotein</keyword>
<keyword id="KW-1267">Proteomics identification</keyword>
<keyword id="KW-1185">Reference proteome</keyword>
<keyword id="KW-0677">Repeat</keyword>
<keyword id="KW-0728">SH3 domain</keyword>
<sequence length="4684" mass="531791">MVAGMLMPRDQLRAIYEVLFREGVMVAKKDRRPRSLHPHVPGVTNLQVMRAMASLRARGLVRETFAWCHFYWYLTNEGIAHLRQYLHLPPEIVPASLQRVRRPVAMVMPARRTPHVQAVQGPLGSPPKRGPLPTEEQRVYRRKELEEVSPETPVVPATTQRTLARPGPEPAPATDERDRVQKKTFTKWVNKHLIKAQRHISDLYEDLRDGHNLISLLEVLSGDSLPREKGRMRFHKLQNVQIALDYLRHRQVKLVNIRNDDIADGNPKLTLGLIWTIILHFQISDIQVSGQSEDMTAKEKLLLWSQRMVEGYQGLRCDNFTSSWRDGRLFNAIIHRHKPLLIDMNKVYRQTNLENLDQAFSVAERDLGVTRLLDPEDVDVPQPDEKSIITYVSSLYDAMPRVPDVQDGVRANELQLRWQEYRELVLLLLQWMRHHTAAFEERRFPSSFEEIEILWSQFLKFKEMELPAKEADKNRSKGIYQSLEGAVQAGQLKVPPGYHPLDVEKEWGKLHVAILEREKQLRSEFERLECLQRIVTKLQMEAGLCEEQLNQADALLQSDVRLLAAGKVPQRAGEVERDLDKADSMIRLLFNDVQTLKDGRHPQGEQMYRRVYRLHERLVAIRTEYNLRLKAGVAAPATQVAQVTLQSVQRRPELEDSTLRYLQDLLAWVEENQHRVDGAEWGVDLPSVEAQLGSHRGLHQSIEEFRAKIERARSDEGQLSPATRGAYRDCLGRLDLQYAKLLNSSKARLRSLESLHSFVAAATKELMWLNEKEEEEVGFDWSDRNTNMTAKKESYSALMRELELKEKKIKELQNAGDRLLREDHPARPTVESFQAALQTQWSWMLQLCCCIEAHLKENAAYFQFFSDVREAEGQLQKLQEALRRKYSCDRSATVTRLEDLLQDAQDEKEQLNEYKGHLSGLAKRAKAVVQLKPRHPAHPMRGRLPLLAVCDYKQVEVTVHKGDECQLVGPAQPSHWKVLSSSGSEAAVPSVCFLVPPPNQEAQEAVTRLEAQHQALVTLWHQLHVDMKSLLAWQSLRRDVQLIRSWSLATFRTLKPEEQRQALHSLELHYQAFLRDSQDAGGFGPEDRLMAEREYGSCSHHYQQLLQSLEQGAQEESRCQRCISELKDIRLQLEACETRTVHRLRLPLDKEPARECAQRIAEQQKAQAEVEGLGKGVARLSAEAEKVLALPEPSPAAPTLRSELELTLGKLEQVRSLSAIYLEKLKTISLVIRGTQGAEEVLRAHEEQLKEAQAVPATLPELEATKASLKKLRAQAEAQQPTFDALRDELRGAQEVGERLQQRHGERDVEVERWRERVAQLLERWQAVLAQTDVRQRELEQLGRQLRYYRESADPLGAWLQDARRRQEQIQAMPLADSQAVREQLRQEQALLEEIERHGEKVEECQRFAKQYINAIKDYELQLVTYKAQLEPVASPAKKPKVQSGSESVIQEYVDLRTHYSELTTLTSQYIKFISETLRRMEEEERLAEQQRAEERERLAEVEAALEKQRQLAEAHAQAKAQAEREAKELQQRMQEEVVRREEAAVDAQQQKRSIQEELQQLRQSSEAEIQAKARQAEAAERSRLRIEEEIRVVRLQLEATERQRGGAEGELQALRARAEEAEAQKRQAQEEAERLRRQVQDESQRKRQAEVELASRVKAEAEAAREKQRALQALEELRLQAEEAERRLRQAEVERARQVQVALETAQRSAEAELQSKRASFAEKTAQLERSLQEEHVAVAQLREEAERRAQQQAEAERAREEAERELERWQLKANEALRLRLQAEEVAQQKSLAQAEAEKQKEEAEREARRRGKAEEQAVRQRELAEQELEKQRQLAEGTAQQRLAAEQELIRLRAETEQGEQQRQLLEEELARLQREAAAATQKRQELEAELAKVRAEMEVLLASKARAEEESRSTSEKSKQRLEAEAGRFRELAEEAARLRALAEEAKRQRQLAEEDAARQRAEAERVLAEKLAAIGEATRLKTEAEIALKEKEAENERLRRLAEDEAFQRRRLEEQAAQHKADIEERLAQLRKASDSELERQKGLVEDTLRQRRQVEEEILALKASFEKAAAGKAELELELGRIRSNAEDTLRSKEQAELEAARQRQLAAEEERRRREAEERVQKSLAAEEEAARQRKAALEEVERLKAKVEEARRLRERAEQESARQLQLAQEAAQKRLQAEEKAHAFAVQQKEQELQQTLQQEQSVLDQLRGEAEAARRAAEEAEEARVQAEREAAQSRRQVEEAERLKQSAEEQAQARAQAQAAAEKLRKEAEQEAARRAQAEQAALRQKQAADAEMEKHKKFAEQTLRQKAQVEQELTTLRLQLEETDHQKNLLDEELQRLKAEATEAARQRSQVEEELFSVRVQMEELSKLKARIEAENRALILRDKDNTQRFLQEEAEKMKQVAEEAARLSVAAQEAARLRQLAEEDLAQQRALAEKMLKEKMQAVQEATRLKAEAELLQQQKELAQEQARRLQEDKEQMAQQLAEETQGFQRTLEAERQRQLEMSAEAERLKLRVAEMSRAQARAEEDAQRFRKQAEEIGEKLHRTELATQEKVTLVQTLEIQRQQSDHDAERLREAIAELEREKEKLQQEAKLLQLKSEEMQTVQQEQLLQETQALQQSFLSEKDSLLQRERFIEQEKAKLEQLFQDEVAKAQQLREEQQRQQQQMEQERQRLVASMEEARRRQHEAEEGVRRKQEELQQLEQQRRQQEELLAEENQRLREQLQLLEEQHRAALAHSEEVTASQVAATKTLPNGRDALDGPAAEAEPEHSFDGLRRKVSAQRLQEAGILSAEELQRLAQGHTTVDELARREDVRHYLQGRSSIAGLLLKATNEKLSVYAALQRQLLSPGTALILLEAQAASGFLLDPVRNRRLTVNEAVKEGVVGPELHHKLLSAERAVTGYKDPYTGQQISLFQAMQKGLIVREHGIRLLEAQIATGGVIDPVHSHRVPVDVAYRRGYFDEEMNRVLADPSDDTKGFFDPNTHENLTYLQLLERCVEDPETGLCLLPLTDKAAKGGELVYTDSEARDVFEKATVSAPFGKFQGKTVTIWEIINSEYFTAEQRRDLLRQFRTGRITVEKIIKIIITVVEEQEQKGRLCFEGLRSLVPAAELLESRVIDRELYQQLQRGERSVRDVAEVDTVRRALRGANVIAGVWLEEAGQKLSIYNALKKDLLPSDMAVALLEAQAGTGHIIDPATSARLTVDEAVRAGLVGPEFHEKLLSAEKAVTGYRDPYTGQSVSLFQALKKGLIPREQGLRLLDAQLSTGGIVDPSKSHRVPLDVACARGCLDEETSRALSAPRADAKAYSDPSTGEPATYGELQQRCRPDQLTGLSLLPLSEKAARARQEELYSELQARETFEKTPVEVPVGGFKGRTVTVWELISSEYFTAEQRQELLRQFRTGKVTVEKVIKILITIVEEVETLRQERLSFSGLRAPVPASELLASGVLSRAQFEQLKDGKTTVKDLSELGSVRTLLQGSGCLAGIYLEDTKEKVSIYEAMRRGLLRATTAALLLEAQAATGFLVDPVRNQRLYVHEAVKAGVVGPELHEQLLSAEKAVTGYRDPYSGSTISLFQAMQKGLVLRQHGIRLLEAQIATGGIIDPVHSHRVPVDVAYQRGYFSEEMNRVLADPSDDTKGFFDPNTHENLTYRQLLERCVEDPETGLRLLPLKGAEKAEVVETTQVYTEEETRRAFEETQIDIPGGGSHGGSTMSLWEVMQSDLIPEEQRAQLMADFQAGRVTKERMIIIIIEIIEKTEIIRQQGLASYDYVRRRLTAEDLFEARIISLETYNLLREGTRSLREALEAESAWCYLYGTGSVAGVYLPGSRQTLSIYQALKKGLLSAEVARLLLEAQAATGFLLDPVKGERLTVDEAVRKGLVGPELHDRLLSAERAVTGYRDPYTEQTISLFQAMKKELIPTEEALRLLDAQLATGGIVDPRLGFHLPLEVAYQRGYLNKDTHDQLSEPSEVRSYVDPSTDERLSYTQLLRRCRRDDGTGQLLLPLSDARKLTFRGLRKQITMEELVRSQVMDEATALQLREGLTSIEEVTKNLQKFLEGTSCIAGVFVDATKERLSVYQAMKKGIIRPGTAFELLEAQAATGYVIDPIKGLKLTVEEAVRMGIVGPEFKDKLLSAERAVTGYKDPYSGKLISLFQAMKKGLILKDHGIRLLEAQIATGGIIDPEESHRLPVEVAYKRGLFDEEMNEILTDPSDDTKGFFDPNTEENLTYLQLMERCITDPQTGLCLLPLKEKKRERKTSSKSSVRKRRVVIVDPETGKEMSVYEAYRKGLIDHQTYLELSEQECEWEEITISSSDGVVKSMIIDRRSGRQYDIDDAIAKNLIDRSALDQYRAGTLSITEFADMLSGNAGGFRSRSSSVGSSSSYPISPAVSRTQLASWSDPTEETGPVAGILDTETLEKVSITEAMHRNLVDNITGQRLLEAQACTGGIIDPSTGERFPVTDAVNKGLVDKIMVDRINLAQKAFCGFEDPRTKTKMSAAQALKKGWLYYEAGQRFLEVQYLTGGLIEPDTPGRVPLDEALQRGTVDARTAQKLRDVGAYSKYLTCPKTKLKISYKDALDRSMVEEGTGLRLLEAAAQSTKGYYSPYSVSGSGSTAGSRTGSRTGSRAGSRRGSFDATGSGFSMTFSSSSYSSSGYGRRYASGSSASLGGPESAVA</sequence>
<feature type="chain" id="PRO_0000078135" description="Plectin">
    <location>
        <begin position="1"/>
        <end position="4684"/>
    </location>
</feature>
<feature type="domain" description="Calponin-homology (CH) 1" evidence="6">
    <location>
        <begin position="179"/>
        <end position="282"/>
    </location>
</feature>
<feature type="domain" description="Calponin-homology (CH) 2" evidence="6">
    <location>
        <begin position="295"/>
        <end position="400"/>
    </location>
</feature>
<feature type="repeat" description="Spectrin 1">
    <location>
        <begin position="645"/>
        <end position="710"/>
    </location>
</feature>
<feature type="repeat" description="Spectrin 2">
    <location>
        <begin position="740"/>
        <end position="824"/>
    </location>
</feature>
<feature type="repeat" description="Spectrin 3">
    <location>
        <begin position="837"/>
        <end position="930"/>
    </location>
</feature>
<feature type="domain" description="SH3" evidence="7">
    <location>
        <begin position="941"/>
        <end position="998"/>
    </location>
</feature>
<feature type="repeat" description="Spectrin 4">
    <location>
        <begin position="1315"/>
        <end position="1415"/>
    </location>
</feature>
<feature type="repeat" description="Plectin 1">
    <location>
        <begin position="2826"/>
        <end position="2863"/>
    </location>
</feature>
<feature type="repeat" description="Plectin 2">
    <location>
        <begin position="2864"/>
        <end position="2901"/>
    </location>
</feature>
<feature type="repeat" description="Plectin 3">
    <location>
        <begin position="2902"/>
        <end position="2939"/>
    </location>
</feature>
<feature type="repeat" description="Plectin 4">
    <location>
        <begin position="2940"/>
        <end position="2977"/>
    </location>
</feature>
<feature type="repeat" description="Plectin 5">
    <location>
        <begin position="2981"/>
        <end position="3015"/>
    </location>
</feature>
<feature type="repeat" description="Plectin 6">
    <location>
        <begin position="3116"/>
        <end position="3153"/>
    </location>
</feature>
<feature type="repeat" description="Plectin 7">
    <location>
        <begin position="3154"/>
        <end position="3191"/>
    </location>
</feature>
<feature type="repeat" description="Plectin 8">
    <location>
        <begin position="3192"/>
        <end position="3229"/>
    </location>
</feature>
<feature type="repeat" description="Plectin 9">
    <location>
        <begin position="3230"/>
        <end position="3267"/>
    </location>
</feature>
<feature type="repeat" description="Plectin 10">
    <location>
        <begin position="3268"/>
        <end position="3305"/>
    </location>
</feature>
<feature type="repeat" description="Plectin 11">
    <location>
        <begin position="3306"/>
        <end position="3343"/>
    </location>
</feature>
<feature type="repeat" description="Plectin 12">
    <location>
        <begin position="3485"/>
        <end position="3522"/>
    </location>
</feature>
<feature type="repeat" description="Plectin 13">
    <location>
        <begin position="3523"/>
        <end position="3560"/>
    </location>
</feature>
<feature type="repeat" description="Plectin 14">
    <location>
        <begin position="3561"/>
        <end position="3598"/>
    </location>
</feature>
<feature type="repeat" description="Plectin 15">
    <location>
        <begin position="3599"/>
        <end position="3636"/>
    </location>
</feature>
<feature type="repeat" description="Plectin 16">
    <location>
        <begin position="3640"/>
        <end position="3674"/>
    </location>
</feature>
<feature type="repeat" description="Plectin 17">
    <location>
        <begin position="3820"/>
        <end position="3857"/>
    </location>
</feature>
<feature type="repeat" description="Plectin 18">
    <location>
        <begin position="3858"/>
        <end position="3895"/>
    </location>
</feature>
<feature type="repeat" description="Plectin 19">
    <location>
        <begin position="3896"/>
        <end position="3933"/>
    </location>
</feature>
<feature type="repeat" description="Plectin 20">
    <location>
        <begin position="3934"/>
        <end position="3971"/>
    </location>
</feature>
<feature type="repeat" description="Plectin 21">
    <location>
        <begin position="3975"/>
        <end position="4008"/>
    </location>
</feature>
<feature type="repeat" description="Plectin 22">
    <location>
        <begin position="4063"/>
        <end position="4100"/>
    </location>
</feature>
<feature type="repeat" description="Plectin 23">
    <location>
        <begin position="4101"/>
        <end position="4138"/>
    </location>
</feature>
<feature type="repeat" description="Plectin 24">
    <location>
        <begin position="4139"/>
        <end position="4176"/>
    </location>
</feature>
<feature type="repeat" description="Plectin 25">
    <location>
        <begin position="4177"/>
        <end position="4214"/>
    </location>
</feature>
<feature type="repeat" description="Plectin 26">
    <location>
        <begin position="4218"/>
        <end position="4252"/>
    </location>
</feature>
<feature type="repeat" description="Plectin 27">
    <location>
        <begin position="4265"/>
        <end position="4305"/>
    </location>
</feature>
<feature type="repeat" description="Plectin 28">
    <location>
        <begin position="4319"/>
        <end position="4356"/>
    </location>
</feature>
<feature type="repeat" description="Plectin 29">
    <location>
        <begin position="4408"/>
        <end position="4445"/>
    </location>
</feature>
<feature type="repeat" description="Plectin 30">
    <location>
        <begin position="4446"/>
        <end position="4483"/>
    </location>
</feature>
<feature type="repeat" description="Plectin 31">
    <location>
        <begin position="4484"/>
        <end position="4521"/>
    </location>
</feature>
<feature type="repeat" description="Plectin 32">
    <location>
        <begin position="4522"/>
        <end position="4559"/>
    </location>
</feature>
<feature type="repeat" description="Plectin 33">
    <location>
        <begin position="4560"/>
        <end position="4597"/>
    </location>
</feature>
<feature type="region of interest" description="Globular 1">
    <location>
        <begin position="1"/>
        <end position="1470"/>
    </location>
</feature>
<feature type="region of interest" description="Disordered" evidence="8">
    <location>
        <begin position="144"/>
        <end position="179"/>
    </location>
</feature>
<feature type="region of interest" description="Actin-binding">
    <location>
        <begin position="175"/>
        <end position="400"/>
    </location>
</feature>
<feature type="region of interest" description="Central fibrous rod domain">
    <location>
        <begin position="1471"/>
        <end position="2755"/>
    </location>
</feature>
<feature type="region of interest" description="Disordered" evidence="8">
    <location>
        <begin position="1618"/>
        <end position="1650"/>
    </location>
</feature>
<feature type="region of interest" description="Disordered" evidence="8">
    <location>
        <begin position="1794"/>
        <end position="1836"/>
    </location>
</feature>
<feature type="region of interest" description="Disordered" evidence="8">
    <location>
        <begin position="2105"/>
        <end position="2139"/>
    </location>
</feature>
<feature type="region of interest" description="Disordered" evidence="8">
    <location>
        <begin position="2217"/>
        <end position="2307"/>
    </location>
</feature>
<feature type="region of interest" description="Disordered" evidence="8">
    <location>
        <begin position="2668"/>
        <end position="2707"/>
    </location>
</feature>
<feature type="region of interest" description="Globular 2">
    <location>
        <begin position="2756"/>
        <end position="4684"/>
    </location>
</feature>
<feature type="region of interest" description="Disordered" evidence="8">
    <location>
        <begin position="2763"/>
        <end position="2784"/>
    </location>
</feature>
<feature type="region of interest" description="Disordered" evidence="8">
    <location>
        <begin position="3310"/>
        <end position="3331"/>
    </location>
</feature>
<feature type="region of interest" description="Binding to intermediate filaments" evidence="1">
    <location>
        <begin position="4250"/>
        <end position="4300"/>
    </location>
</feature>
<feature type="region of interest" description="Disordered" evidence="8">
    <location>
        <begin position="4611"/>
        <end position="4684"/>
    </location>
</feature>
<feature type="region of interest" description="4 X 4 AA tandem repeats of G-S-R-X">
    <location>
        <begin position="4625"/>
        <end position="4640"/>
    </location>
</feature>
<feature type="coiled-coil region" evidence="5">
    <location>
        <begin position="1469"/>
        <end position="2756"/>
    </location>
</feature>
<feature type="compositionally biased region" description="Basic and acidic residues" evidence="8">
    <location>
        <begin position="1798"/>
        <end position="1836"/>
    </location>
</feature>
<feature type="compositionally biased region" description="Basic and acidic residues" evidence="8">
    <location>
        <begin position="2105"/>
        <end position="2128"/>
    </location>
</feature>
<feature type="compositionally biased region" description="Basic and acidic residues" evidence="8">
    <location>
        <begin position="2217"/>
        <end position="2258"/>
    </location>
</feature>
<feature type="compositionally biased region" description="Low complexity" evidence="8">
    <location>
        <begin position="2259"/>
        <end position="2272"/>
    </location>
</feature>
<feature type="compositionally biased region" description="Basic and acidic residues" evidence="8">
    <location>
        <begin position="2273"/>
        <end position="2288"/>
    </location>
</feature>
<feature type="compositionally biased region" description="Basic and acidic residues" evidence="8">
    <location>
        <begin position="2679"/>
        <end position="2707"/>
    </location>
</feature>
<feature type="compositionally biased region" description="Low complexity" evidence="8">
    <location>
        <begin position="4611"/>
        <end position="4678"/>
    </location>
</feature>
<feature type="modified residue" description="Phosphothreonine" evidence="36">
    <location>
        <position position="113"/>
    </location>
</feature>
<feature type="modified residue" description="Phosphoserine" evidence="30 31 36 38">
    <location>
        <position position="125"/>
    </location>
</feature>
<feature type="modified residue" description="Phosphoserine" evidence="30 31 36 38">
    <location>
        <position position="149"/>
    </location>
</feature>
<feature type="modified residue" description="Phosphoserine" evidence="30 31 33 36 38 40">
    <location>
        <position position="720"/>
    </location>
</feature>
<feature type="modified residue" description="Phosphoserine" evidence="40">
    <location>
        <position position="1047"/>
    </location>
</feature>
<feature type="modified residue" description="Phosphoserine" evidence="30 32 36 37 38 40">
    <location>
        <position position="1435"/>
    </location>
</feature>
<feature type="modified residue" description="Phosphoserine" evidence="30">
    <location>
        <position position="1721"/>
    </location>
</feature>
<feature type="modified residue" description="N6-acetyllysine" evidence="4">
    <location>
        <position position="1725"/>
    </location>
</feature>
<feature type="modified residue" description="Phosphoserine" evidence="36 38">
    <location>
        <position position="1732"/>
    </location>
</feature>
<feature type="modified residue" description="Phosphoserine" evidence="40">
    <location>
        <position position="2631"/>
    </location>
</feature>
<feature type="modified residue" description="N6-acetyllysine" evidence="4">
    <location>
        <position position="2636"/>
    </location>
</feature>
<feature type="modified residue" description="Phosphoserine" evidence="38 40">
    <location>
        <position position="2782"/>
    </location>
</feature>
<feature type="modified residue" description="Phosphoserine" evidence="40">
    <location>
        <position position="2802"/>
    </location>
</feature>
<feature type="modified residue" description="Phosphothreonine" evidence="40">
    <location>
        <position position="2886"/>
    </location>
</feature>
<feature type="modified residue" description="Phosphotyrosine" evidence="4">
    <location>
        <position position="3033"/>
    </location>
</feature>
<feature type="modified residue" description="Phosphoserine" evidence="40">
    <location>
        <position position="3036"/>
    </location>
</feature>
<feature type="modified residue" description="N6-acetyllysine" evidence="4">
    <location>
        <position position="3053"/>
    </location>
</feature>
<feature type="modified residue" description="N6-acetyllysine" evidence="34">
    <location>
        <position position="3091"/>
    </location>
</feature>
<feature type="modified residue" description="Phosphotyrosine" evidence="4">
    <location>
        <position position="3362"/>
    </location>
</feature>
<feature type="modified residue" description="N6-acetyllysine" evidence="34">
    <location>
        <position position="3420"/>
    </location>
</feature>
<feature type="modified residue" description="Phosphoserine" evidence="2">
    <location>
        <position position="3580"/>
    </location>
</feature>
<feature type="modified residue" description="Phosphothreonine" evidence="40">
    <location>
        <position position="3785"/>
    </location>
</feature>
<feature type="modified residue" description="Phosphothreonine" evidence="30 33 36 38 40">
    <location>
        <position position="4030"/>
    </location>
</feature>
<feature type="modified residue" description="Phosphoserine" evidence="40">
    <location>
        <position position="4054"/>
    </location>
</feature>
<feature type="modified residue" description="Phosphoserine" evidence="31 36">
    <location>
        <position position="4382"/>
    </location>
</feature>
<feature type="modified residue" description="Phosphoserine" evidence="4">
    <location>
        <position position="4384"/>
    </location>
</feature>
<feature type="modified residue" description="Phosphoserine" evidence="26 31 38">
    <location>
        <position position="4385"/>
    </location>
</feature>
<feature type="modified residue" description="Phosphoserine" evidence="31 35 38 40">
    <location>
        <position position="4386"/>
    </location>
</feature>
<feature type="modified residue" description="Phosphoserine" evidence="31 35 38">
    <location>
        <position position="4389"/>
    </location>
</feature>
<feature type="modified residue" description="Phosphoserine" evidence="31 40">
    <location>
        <position position="4390"/>
    </location>
</feature>
<feature type="modified residue" description="Phosphoserine" evidence="31">
    <location>
        <position position="4391"/>
    </location>
</feature>
<feature type="modified residue" description="Phosphoserine" evidence="31 40">
    <location>
        <position position="4392"/>
    </location>
</feature>
<feature type="modified residue" description="Phosphotyrosine" evidence="40">
    <location>
        <position position="4393"/>
    </location>
</feature>
<feature type="modified residue" description="Phosphoserine" evidence="31 35 36 38 40">
    <location>
        <position position="4396"/>
    </location>
</feature>
<feature type="modified residue" description="Phosphoserine" evidence="36 38 40">
    <location>
        <position position="4400"/>
    </location>
</feature>
<feature type="modified residue" description="Phosphoserine" evidence="2">
    <location>
        <position position="4406"/>
    </location>
</feature>
<feature type="modified residue" description="Phosphothreonine" evidence="30">
    <location>
        <position position="4411"/>
    </location>
</feature>
<feature type="modified residue" description="Phosphothreonine; by CDK1" evidence="3">
    <location>
        <position position="4539"/>
    </location>
</feature>
<feature type="modified residue" description="Phosphoserine" evidence="38">
    <location>
        <position position="4607"/>
    </location>
</feature>
<feature type="modified residue" description="Phosphoserine" evidence="31 35 36 38">
    <location>
        <position position="4613"/>
    </location>
</feature>
<feature type="modified residue" description="Phosphotyrosine" evidence="4">
    <location>
        <position position="4615"/>
    </location>
</feature>
<feature type="modified residue" description="Phosphoserine" evidence="40">
    <location>
        <position position="4616"/>
    </location>
</feature>
<feature type="modified residue" description="Phosphoserine" evidence="35 38">
    <location>
        <position position="4618"/>
    </location>
</feature>
<feature type="modified residue" description="Phosphoserine" evidence="31 36 38">
    <location>
        <position position="4622"/>
    </location>
</feature>
<feature type="modified residue" description="Phosphothreonine" evidence="4">
    <location>
        <position position="4623"/>
    </location>
</feature>
<feature type="modified residue" description="Phosphoserine" evidence="31 33 35 38 40">
    <location>
        <position position="4626"/>
    </location>
</feature>
<feature type="modified residue" description="Omega-N-methylarginine" evidence="4">
    <location>
        <position position="4627"/>
    </location>
</feature>
<feature type="modified residue" description="Omega-N-methylarginine" evidence="39">
    <location>
        <position position="4640"/>
    </location>
</feature>
<feature type="modified residue" description="Phosphoserine" evidence="31 36">
    <location>
        <position position="4642"/>
    </location>
</feature>
<feature type="modified residue" description="Phosphoserine" evidence="38">
    <location>
        <position position="4672"/>
    </location>
</feature>
<feature type="modified residue" description="Phosphoserine" evidence="38 40">
    <location>
        <position position="4675"/>
    </location>
</feature>
<feature type="splice variant" id="VSP_005030" description="In isoform 2 and isoform 3." evidence="27 28">
    <original>MVAGMLMPRDQLRAIYEVLFREGVMVAKKDRRPRSLHPHVPGVTNLQVMRAMASLRARGLVRETFAWCHFYWYLTNEGIAHLRQYLHLPPEIVPASLQRVRRPVAMVMPARRTPHVQAVQGPLGSPPKRGPLPTEEQRVYRRKELEEVSPETPVVPATTQRTLARPGPEPAPAT</original>
    <variation>MSGEDAEVRAVSEDVSNGSSGSPSPGDTLPWNLGKTQRSRRSGGGAGSNGSVLDPAERAVIRIA</variation>
    <location>
        <begin position="1"/>
        <end position="174"/>
    </location>
</feature>
<feature type="splice variant" id="VSP_023510" description="In isoform 4." evidence="27">
    <original>MVAGMLMPRDQLRAIYEVLFREGVMVAKKDRRPRSLHPHVPGVTNLQVMRAMASLRARGLVRETFAWCHFYWYLTNEGIAHLRQYLHLPPEIVPASLQRVRRPVAMVMPARRTPHVQAVQGPLGSPPKRGPLPTEEQRVYRRKELEEVSPETPVVPATTQRTLARPGPEPAPAT</original>
    <variation>MSQHQLRVPQPEGLGRKRTSSEDNLYLAVLRASEGKK</variation>
    <location>
        <begin position="1"/>
        <end position="174"/>
    </location>
</feature>
<feature type="splice variant" id="VSP_037100" description="In isoform 7." evidence="27">
    <location>
        <begin position="1"/>
        <end position="169"/>
    </location>
</feature>
<feature type="splice variant" id="VSP_037101" description="In isoform 8." evidence="27">
    <location>
        <begin position="1"/>
        <end position="159"/>
    </location>
</feature>
<feature type="splice variant" id="VSP_037102" description="In isoform 9." evidence="27">
    <location>
        <begin position="1"/>
        <end position="151"/>
    </location>
</feature>
<feature type="splice variant" id="VSP_037103" description="In isoform 5." evidence="27">
    <location>
        <begin position="1"/>
        <end position="137"/>
    </location>
</feature>
<feature type="splice variant" id="VSP_037104" description="In isoform 6." evidence="27">
    <location>
        <begin position="1"/>
        <end position="133"/>
    </location>
</feature>
<feature type="splice variant" id="VSP_037105" description="In isoform 6." evidence="27">
    <original>TEEQRVYRRKELEEVSPETPVVPATTQRTLARPGPEPAPAT</original>
    <variation>MSGAGGAFASPREVLLERPCWLDGGCEPARRGYLYQQLCCV</variation>
    <location>
        <begin position="134"/>
        <end position="174"/>
    </location>
</feature>
<feature type="splice variant" id="VSP_037106" description="In isoform 5." evidence="27">
    <original>RVYRRKELEEVSPETPVVPATTQRTLARPGPEPAPAT</original>
    <variation>MEPSGSLFPSLVVVGHVVTLAAVWHWRRGRRWAQDEQ</variation>
    <location>
        <begin position="138"/>
        <end position="174"/>
    </location>
</feature>
<feature type="splice variant" id="VSP_037107" description="In isoform 9." evidence="27">
    <original>TPVVPATTQRTLARPGPEPAPAT</original>
    <variation>MAGPLPDEQDFIQAYEEVREKYK</variation>
    <location>
        <begin position="152"/>
        <end position="174"/>
    </location>
</feature>
<feature type="splice variant" id="VSP_037108" description="In isoform 8." evidence="27">
    <original>QRTLARPGPEPAPAT</original>
    <variation>MDPSRAIQNEISSLK</variation>
    <location>
        <begin position="160"/>
        <end position="174"/>
    </location>
</feature>
<feature type="splice variant" id="VSP_037109" description="In isoform 7." evidence="27">
    <original>PAPAT</original>
    <variation>MKIVP</variation>
    <location>
        <begin position="170"/>
        <end position="174"/>
    </location>
</feature>
<feature type="splice variant" id="VSP_005031" description="In isoform 3." evidence="28">
    <location>
        <begin position="409"/>
        <end position="412"/>
    </location>
</feature>
<feature type="sequence variant" id="VAR_075706" description="In dbSNP:rs200335928." evidence="22">
    <original>R</original>
    <variation>H</variation>
    <location>
        <position position="102"/>
    </location>
</feature>
<feature type="sequence variant" id="VAR_011336" description="In EBS5B." evidence="9">
    <original>L</original>
    <variation>LL</variation>
    <location>
        <position position="429"/>
    </location>
</feature>
<feature type="sequence variant" id="VAR_053585" description="In dbSNP:rs11136336.">
    <original>A</original>
    <variation>V</variation>
    <location>
        <position position="641"/>
    </location>
</feature>
<feature type="sequence variant" id="VAR_011337" description="In EBS5B." evidence="25">
    <location>
        <begin position="1003"/>
        <end position="1005"/>
    </location>
</feature>
<feature type="sequence variant" id="VAR_060088" description="In dbSNP:rs3135109." evidence="24">
    <original>L</original>
    <variation>V</variation>
    <location>
        <position position="1321"/>
    </location>
</feature>
<feature type="sequence variant" id="VAR_060089" description="In dbSNP:rs11136334.">
    <original>R</original>
    <variation>Q</variation>
    <location>
        <position position="1386"/>
    </location>
</feature>
<feature type="sequence variant" id="VAR_062133" description="In dbSNP:rs55895668.">
    <original>H</original>
    <variation>R</variation>
    <location>
        <position position="1459"/>
    </location>
</feature>
<feature type="sequence variant" id="VAR_076564" description="In dbSNP:rs200543521." evidence="20">
    <original>R</original>
    <variation>W</variation>
    <location>
        <position position="2005"/>
    </location>
</feature>
<feature type="sequence variant" id="VAR_015817" description="In EBS5A; dbSNP:rs80338756." evidence="10">
    <original>R</original>
    <variation>W</variation>
    <location>
        <position position="2110"/>
    </location>
</feature>
<feature type="sequence variant" id="VAR_053586" description="In dbSNP:rs34893635.">
    <original>R</original>
    <variation>W</variation>
    <location>
        <position position="2150"/>
    </location>
</feature>
<feature type="sequence variant" id="VAR_053587" description="In dbSNP:rs7002002.">
    <original>A</original>
    <variation>V</variation>
    <location>
        <position position="2194"/>
    </location>
</feature>
<feature type="sequence variant" id="VAR_053588" description="In dbSNP:rs7833924.">
    <original>S</original>
    <variation>P</variation>
    <location>
        <position position="2791"/>
    </location>
</feature>
<feature type="sequence variant" id="VAR_053589" description="In dbSNP:rs35723243.">
    <original>R</original>
    <variation>W</variation>
    <location>
        <position position="2821"/>
    </location>
</feature>
<feature type="sequence variant" id="VAR_053590" description="In dbSNP:rs6558407.">
    <original>R</original>
    <variation>H</variation>
    <location>
        <position position="2969"/>
    </location>
</feature>
<feature type="sequence variant" id="VAR_053591" description="In dbSNP:rs35027700.">
    <original>V</original>
    <variation>I</variation>
    <location>
        <position position="3162"/>
    </location>
</feature>
<feature type="sequence variant" id="VAR_053592" description="In dbSNP:rs35858667.">
    <original>A</original>
    <variation>V</variation>
    <location>
        <position position="3171"/>
    </location>
</feature>
<feature type="sequence variant" id="VAR_053593" description="In dbSNP:rs34725742.">
    <original>T</original>
    <variation>M</variation>
    <location>
        <position position="3486"/>
    </location>
</feature>
<feature type="sequence variant" id="VAR_053594" description="In dbSNP:rs35261863.">
    <original>G</original>
    <variation>A</variation>
    <location>
        <position position="3490"/>
    </location>
</feature>
<feature type="sequence variant" id="VAR_076565" description="In LGMDR17." evidence="20 23">
    <original>G</original>
    <variation>S</variation>
    <location>
        <position position="3945"/>
    </location>
</feature>
<feature type="sequence conflict" description="In Ref. 1; CAA91196." evidence="29" ref="1">
    <original>Y</original>
    <variation>F</variation>
    <location>
        <position position="71"/>
    </location>
</feature>
<feature type="sequence conflict" description="In Ref. 1; CAA91196." evidence="29" ref="1">
    <original>P</original>
    <variation>A</variation>
    <location>
        <position position="94"/>
    </location>
</feature>
<feature type="sequence conflict" description="In Ref. 1; CAA91196." evidence="29" ref="1">
    <original>V</original>
    <variation>L</variation>
    <location>
        <position position="139"/>
    </location>
</feature>
<feature type="sequence conflict" description="In Ref. 1; CAA91196." evidence="29" ref="1">
    <original>F</original>
    <variation>S</variation>
    <location>
        <position position="185"/>
    </location>
</feature>
<feature type="sequence conflict" description="In Ref. 2; AAB05427/AAB05428." evidence="29" ref="2">
    <original>N</original>
    <variation>D</variation>
    <location>
        <position position="259"/>
    </location>
</feature>
<feature type="sequence conflict" description="In Ref. 1; CAA91196." evidence="29" ref="1">
    <original>N</original>
    <variation>H</variation>
    <location>
        <position position="550"/>
    </location>
</feature>
<feature type="sequence conflict" description="In Ref. 1; CAA91196." evidence="29" ref="1">
    <original>V</original>
    <variation>I</variation>
    <location>
        <position position="560"/>
    </location>
</feature>
<feature type="sequence conflict" description="In Ref. 1; CAA91196." evidence="29" ref="1">
    <original>R</original>
    <variation>Q</variation>
    <location>
        <position position="706"/>
    </location>
</feature>
<feature type="sequence conflict" description="In Ref. 1; CAA91196." evidence="29" ref="1">
    <original>Y</original>
    <variation>N</variation>
    <location>
        <position position="886"/>
    </location>
</feature>
<feature type="sequence conflict" description="In Ref. 1; CAA91196." evidence="29" ref="1">
    <original>A</original>
    <variation>V</variation>
    <location>
        <position position="1002"/>
    </location>
</feature>
<feature type="sequence conflict" description="In Ref. 2; AAB05427/AAB05428." evidence="29" ref="2">
    <original>V</original>
    <variation>L</variation>
    <location>
        <position position="1309"/>
    </location>
</feature>
<feature type="sequence conflict" description="In Ref. 2; AAB05427/AAB05428." evidence="29" ref="2">
    <original>V</original>
    <variation>L</variation>
    <location>
        <position position="1334"/>
    </location>
</feature>
<feature type="sequence conflict" description="In Ref. 1; CAA91196." evidence="29" ref="1">
    <original>M</original>
    <variation>I</variation>
    <location>
        <position position="1534"/>
    </location>
</feature>
<feature type="sequence conflict" description="In Ref. 2; AAB05427/AAB05428." evidence="29" ref="2">
    <original>A</original>
    <variation>T</variation>
    <location>
        <position position="1662"/>
    </location>
</feature>
<feature type="sequence conflict" description="In Ref. 1; CAA91196." evidence="29" ref="1">
    <original>RLR</original>
    <variation>WLC</variation>
    <location>
        <begin position="1688"/>
        <end position="1690"/>
    </location>
</feature>
<feature type="sequence conflict" description="In Ref. 1; CAA91196." evidence="29" ref="1">
    <original>E</original>
    <variation>Q</variation>
    <location>
        <position position="1767"/>
    </location>
</feature>
<feature type="sequence conflict" description="In Ref. 1; CAA91196." evidence="29" ref="1">
    <original>A</original>
    <variation>L</variation>
    <location>
        <position position="1789"/>
    </location>
</feature>
<feature type="sequence conflict" description="In Ref. 1; CAA91196." evidence="29" ref="1">
    <original>R</original>
    <variation>K</variation>
    <location>
        <position position="1910"/>
    </location>
</feature>
<feature type="sequence conflict" description="In Ref. 2; AAB05427/AAB05428/CAA65765 and 3; AAR95680/AAR95682/AAR95683." evidence="29" ref="2 3">
    <original>K</original>
    <variation>N</variation>
    <location>
        <position position="2154"/>
    </location>
</feature>
<feature type="sequence conflict" description="In Ref. 1; CAA91196." evidence="29" ref="1">
    <original>R</original>
    <variation>S</variation>
    <location>
        <position position="2160"/>
    </location>
</feature>
<feature type="sequence conflict" description="In Ref. 1; CAA91196." evidence="29" ref="1">
    <original>Q</original>
    <variation>R</variation>
    <location>
        <position position="2215"/>
    </location>
</feature>
<feature type="sequence conflict" description="In Ref. 1; CAA91196 and 2; AAB05427/AAB05428/CAA65765." evidence="29" ref="1 2">
    <original>S</original>
    <variation>A</variation>
    <location>
        <position position="2244"/>
    </location>
</feature>
<feature type="sequence conflict" description="In Ref. 2; AAB05427/AAB05428." evidence="29" ref="2">
    <original>K</original>
    <variation>E</variation>
    <location>
        <position position="3027"/>
    </location>
</feature>
<feature type="sequence conflict" description="In Ref. 1; CAA91196." evidence="29" ref="1">
    <original>A</original>
    <variation>E</variation>
    <location>
        <position position="3310"/>
    </location>
</feature>
<feature type="sequence conflict" description="In Ref. 1; CAA91196." evidence="29" ref="1">
    <original>L</original>
    <variation>F</variation>
    <location>
        <position position="3361"/>
    </location>
</feature>
<feature type="sequence conflict" description="In Ref. 1; CAA91196." evidence="29" ref="1">
    <original>L</original>
    <variation>F</variation>
    <location>
        <position position="3408"/>
    </location>
</feature>
<feature type="sequence conflict" description="In Ref. 1; CAA91196." evidence="29" ref="1">
    <original>A</original>
    <variation>S</variation>
    <location>
        <position position="3447"/>
    </location>
</feature>
<feature type="sequence conflict" description="In Ref. 1; CAA91196." evidence="29" ref="1">
    <original>A</original>
    <variation>G</variation>
    <location>
        <position position="3531"/>
    </location>
</feature>
<feature type="sequence conflict" description="In Ref. 1; CAA91196." evidence="29" ref="1">
    <original>S</original>
    <variation>R</variation>
    <location>
        <position position="3580"/>
    </location>
</feature>
<feature type="sequence conflict" description="In Ref. 1; CAA91196." evidence="29" ref="1">
    <original>Q</original>
    <variation>K</variation>
    <location>
        <position position="3589"/>
    </location>
</feature>
<feature type="sequence conflict" description="In Ref. 1; CAA91196." evidence="29" ref="1">
    <original>Q</original>
    <variation>E</variation>
    <location>
        <position position="3596"/>
    </location>
</feature>
<feature type="sequence conflict" description="In Ref. 1; CAA91196." evidence="29" ref="1">
    <original>H</original>
    <variation>N</variation>
    <location>
        <position position="3616"/>
    </location>
</feature>
<feature type="sequence conflict" description="In Ref. 1; CAA91196." evidence="29" ref="1">
    <original>A</original>
    <variation>V</variation>
    <location>
        <position position="3686"/>
    </location>
</feature>
<feature type="sequence conflict" description="In Ref. 1; CAA91196." evidence="29" ref="1">
    <original>A</original>
    <variation>G</variation>
    <location>
        <position position="3786"/>
    </location>
</feature>
<feature type="sequence conflict" description="In Ref. 1; CAA91196." evidence="29" ref="1">
    <original>R</original>
    <variation>K</variation>
    <location>
        <position position="3808"/>
    </location>
</feature>
<feature type="sequence conflict" description="In Ref. 1; CAA91196." evidence="29" ref="1">
    <original>A</original>
    <variation>G</variation>
    <location>
        <position position="3816"/>
    </location>
</feature>
<feature type="sequence conflict" description="In Ref. 1; CAA91196." evidence="29" ref="1">
    <original>C</original>
    <variation>F</variation>
    <location>
        <position position="3821"/>
    </location>
</feature>
<feature type="sequence conflict" description="In Ref. 1; CAA91196." evidence="29" ref="1">
    <original>Q</original>
    <variation>K</variation>
    <location>
        <position position="3915"/>
    </location>
</feature>
<feature type="sequence conflict" description="In Ref. 1; CAA91196." evidence="29" ref="1">
    <original>R</original>
    <variation>K</variation>
    <location>
        <position position="3999"/>
    </location>
</feature>
<feature type="sequence conflict" description="In Ref. 1; CAA91196." evidence="29" ref="1">
    <original>T</original>
    <variation>S</variation>
    <location>
        <position position="4007"/>
    </location>
</feature>
<feature type="sequence conflict" description="In Ref. 1; CAA91196." evidence="29" ref="1">
    <original>F</original>
    <variation>L</variation>
    <location>
        <position position="4467"/>
    </location>
</feature>
<feature type="helix" evidence="41">
    <location>
        <begin position="174"/>
        <end position="193"/>
    </location>
</feature>
<feature type="helix" evidence="48">
    <location>
        <begin position="194"/>
        <end position="196"/>
    </location>
</feature>
<feature type="turn" evidence="41">
    <location>
        <begin position="203"/>
        <end position="209"/>
    </location>
</feature>
<feature type="helix" evidence="41">
    <location>
        <begin position="211"/>
        <end position="221"/>
    </location>
</feature>
<feature type="helix" evidence="41">
    <location>
        <begin position="233"/>
        <end position="249"/>
    </location>
</feature>
<feature type="helix" evidence="41">
    <location>
        <begin position="259"/>
        <end position="263"/>
    </location>
</feature>
<feature type="helix" evidence="41">
    <location>
        <begin position="267"/>
        <end position="282"/>
    </location>
</feature>
<feature type="turn" evidence="48">
    <location>
        <begin position="283"/>
        <end position="285"/>
    </location>
</feature>
<feature type="helix" evidence="41">
    <location>
        <begin position="297"/>
        <end position="308"/>
    </location>
</feature>
<feature type="turn" evidence="41">
    <location>
        <begin position="309"/>
        <end position="311"/>
    </location>
</feature>
<feature type="helix" evidence="41">
    <location>
        <begin position="322"/>
        <end position="324"/>
    </location>
</feature>
<feature type="helix" evidence="41">
    <location>
        <begin position="328"/>
        <end position="337"/>
    </location>
</feature>
<feature type="helix" evidence="41">
    <location>
        <begin position="339"/>
        <end position="341"/>
    </location>
</feature>
<feature type="helix" evidence="41">
    <location>
        <begin position="344"/>
        <end position="347"/>
    </location>
</feature>
<feature type="helix" evidence="41">
    <location>
        <begin position="352"/>
        <end position="367"/>
    </location>
</feature>
<feature type="helix" evidence="41">
    <location>
        <begin position="375"/>
        <end position="378"/>
    </location>
</feature>
<feature type="strand" evidence="41">
    <location>
        <begin position="380"/>
        <end position="382"/>
    </location>
</feature>
<feature type="helix" evidence="41">
    <location>
        <begin position="385"/>
        <end position="398"/>
    </location>
</feature>
<feature type="helix" evidence="44">
    <location>
        <begin position="414"/>
        <end position="440"/>
    </location>
</feature>
<feature type="helix" evidence="44">
    <location>
        <begin position="448"/>
        <end position="464"/>
    </location>
</feature>
<feature type="helix" evidence="44">
    <location>
        <begin position="466"/>
        <end position="488"/>
    </location>
</feature>
<feature type="strand" evidence="43">
    <location>
        <begin position="490"/>
        <end position="492"/>
    </location>
</feature>
<feature type="helix" evidence="44">
    <location>
        <begin position="500"/>
        <end position="562"/>
    </location>
</feature>
<feature type="turn" evidence="44">
    <location>
        <begin position="563"/>
        <end position="566"/>
    </location>
</feature>
<feature type="helix" evidence="44">
    <location>
        <begin position="572"/>
        <end position="598"/>
    </location>
</feature>
<feature type="helix" evidence="44">
    <location>
        <begin position="604"/>
        <end position="628"/>
    </location>
</feature>
<feature type="helix" evidence="45">
    <location>
        <begin position="656"/>
        <end position="678"/>
    </location>
</feature>
<feature type="helix" evidence="45">
    <location>
        <begin position="685"/>
        <end position="714"/>
    </location>
</feature>
<feature type="helix" evidence="45">
    <location>
        <begin position="715"/>
        <end position="718"/>
    </location>
</feature>
<feature type="helix" evidence="45">
    <location>
        <begin position="721"/>
        <end position="778"/>
    </location>
</feature>
<feature type="helix" evidence="45">
    <location>
        <begin position="788"/>
        <end position="821"/>
    </location>
</feature>
<feature type="helix" evidence="45">
    <location>
        <begin position="827"/>
        <end position="854"/>
    </location>
</feature>
<feature type="helix" evidence="51">
    <location>
        <begin position="861"/>
        <end position="886"/>
    </location>
</feature>
<feature type="helix" evidence="51">
    <location>
        <begin position="894"/>
        <end position="913"/>
    </location>
</feature>
<feature type="helix" evidence="51">
    <location>
        <begin position="915"/>
        <end position="926"/>
    </location>
</feature>
<feature type="helix" evidence="46">
    <location>
        <begin position="932"/>
        <end position="934"/>
    </location>
</feature>
<feature type="strand" evidence="46">
    <location>
        <begin position="944"/>
        <end position="948"/>
    </location>
</feature>
<feature type="strand" evidence="46">
    <location>
        <begin position="964"/>
        <end position="970"/>
    </location>
</feature>
<feature type="strand" evidence="46">
    <location>
        <begin position="975"/>
        <end position="979"/>
    </location>
</feature>
<feature type="strand" evidence="46">
    <location>
        <begin position="985"/>
        <end position="989"/>
    </location>
</feature>
<feature type="helix" evidence="46">
    <location>
        <begin position="990"/>
        <end position="992"/>
    </location>
</feature>
<feature type="helix" evidence="51">
    <location>
        <begin position="999"/>
        <end position="1044"/>
    </location>
</feature>
<feature type="helix" evidence="51">
    <location>
        <begin position="1048"/>
        <end position="1052"/>
    </location>
</feature>
<feature type="helix" evidence="51">
    <location>
        <begin position="1056"/>
        <end position="1076"/>
    </location>
</feature>
<feature type="strand" evidence="51">
    <location>
        <begin position="1077"/>
        <end position="1079"/>
    </location>
</feature>
<feature type="strand" evidence="49">
    <location>
        <begin position="1080"/>
        <end position="1082"/>
    </location>
</feature>
<feature type="helix" evidence="51">
    <location>
        <begin position="1085"/>
        <end position="1109"/>
    </location>
</feature>
<feature type="helix" evidence="50">
    <location>
        <begin position="1118"/>
        <end position="1144"/>
    </location>
</feature>
<feature type="helix" evidence="50">
    <location>
        <begin position="1152"/>
        <end position="1188"/>
    </location>
</feature>
<feature type="strand" evidence="50">
    <location>
        <begin position="1190"/>
        <end position="1192"/>
    </location>
</feature>
<feature type="helix" evidence="50">
    <location>
        <begin position="1197"/>
        <end position="1252"/>
    </location>
</feature>
<feature type="helix" evidence="50">
    <location>
        <begin position="1259"/>
        <end position="1277"/>
    </location>
</feature>
<feature type="helix" evidence="50">
    <location>
        <begin position="1280"/>
        <end position="1304"/>
    </location>
</feature>
<feature type="helix" evidence="50">
    <location>
        <begin position="1311"/>
        <end position="1340"/>
    </location>
</feature>
<feature type="helix" evidence="52">
    <location>
        <begin position="1378"/>
        <end position="1397"/>
    </location>
</feature>
<feature type="helix" evidence="52">
    <location>
        <begin position="1399"/>
        <end position="1430"/>
    </location>
</feature>
<feature type="helix" evidence="52">
    <location>
        <begin position="1445"/>
        <end position="1476"/>
    </location>
</feature>
<feature type="helix" evidence="47">
    <location>
        <begin position="1493"/>
        <end position="1527"/>
    </location>
</feature>
<feature type="strand" evidence="42">
    <location>
        <begin position="4417"/>
        <end position="4422"/>
    </location>
</feature>
<feature type="turn" evidence="42">
    <location>
        <begin position="4423"/>
        <end position="4425"/>
    </location>
</feature>
<feature type="helix" evidence="42">
    <location>
        <begin position="4431"/>
        <end position="4437"/>
    </location>
</feature>
<feature type="helix" evidence="42">
    <location>
        <begin position="4442"/>
        <end position="4454"/>
    </location>
</feature>
<feature type="strand" evidence="42">
    <location>
        <begin position="4456"/>
        <end position="4458"/>
    </location>
</feature>
<feature type="turn" evidence="42">
    <location>
        <begin position="4461"/>
        <end position="4464"/>
    </location>
</feature>
<feature type="helix" evidence="42">
    <location>
        <begin position="4469"/>
        <end position="4475"/>
    </location>
</feature>
<feature type="helix" evidence="42">
    <location>
        <begin position="4480"/>
        <end position="4482"/>
    </location>
</feature>
<feature type="helix" evidence="42">
    <location>
        <begin position="4483"/>
        <end position="4494"/>
    </location>
</feature>
<feature type="turn" evidence="42">
    <location>
        <begin position="4499"/>
        <end position="4501"/>
    </location>
</feature>
<feature type="helix" evidence="42">
    <location>
        <begin position="4507"/>
        <end position="4513"/>
    </location>
</feature>
<feature type="helix" evidence="42">
    <location>
        <begin position="4518"/>
        <end position="4531"/>
    </location>
</feature>
<feature type="strand" evidence="42">
    <location>
        <begin position="4532"/>
        <end position="4535"/>
    </location>
</feature>
<feature type="strand" evidence="42">
    <location>
        <begin position="4537"/>
        <end position="4543"/>
    </location>
</feature>
<feature type="helix" evidence="42">
    <location>
        <begin position="4545"/>
        <end position="4551"/>
    </location>
</feature>
<feature type="helix" evidence="42">
    <location>
        <begin position="4556"/>
        <end position="4563"/>
    </location>
</feature>
<feature type="helix" evidence="42">
    <location>
        <begin position="4565"/>
        <end position="4567"/>
    </location>
</feature>
<feature type="strand" evidence="42">
    <location>
        <begin position="4575"/>
        <end position="4577"/>
    </location>
</feature>
<feature type="helix" evidence="42">
    <location>
        <begin position="4583"/>
        <end position="4589"/>
    </location>
</feature>
<feature type="strand" evidence="42">
    <location>
        <begin position="4591"/>
        <end position="4597"/>
    </location>
</feature>
<feature type="strand" evidence="42">
    <location>
        <begin position="4599"/>
        <end position="4603"/>
    </location>
</feature>
<feature type="region of interest" description="Required for interaction with intermediate filament proteins" evidence="19">
    <location sequence="Q15149-2">
        <begin position="964"/>
        <end position="4574"/>
    </location>
</feature>
<feature type="region of interest" description="Required for interaction with type2 keratins, DES and VIM" evidence="4">
    <location sequence="Q15149-2">
        <begin position="3956"/>
        <end position="4293"/>
    </location>
</feature>
<feature type="region of interest" description="Required for efficient interaction with KRT5 and KRT14 heterodimers" evidence="4">
    <location sequence="Q15149-2">
        <begin position="4505"/>
        <end position="4574"/>
    </location>
</feature>
<feature type="modified residue" description="Phosphoserine" evidence="31 35 36">
    <location sequence="Q15149-2">
        <position position="42"/>
    </location>
</feature>
<feature type="modified residue" description="Phosphoserine" evidence="31 35 36">
    <location sequence="Q15149-3">
        <position position="42"/>
    </location>
</feature>
<feature type="modified residue" description="Phosphoserine" evidence="36">
    <location sequence="Q15149-4">
        <position position="20"/>
    </location>
</feature>
<feature type="modified residue" description="Phosphoserine" evidence="31 36">
    <location sequence="Q15149-4">
        <position position="21"/>
    </location>
</feature>
<feature type="modified residue" description="Phosphotyrosine" evidence="4">
    <location sequence="Q15149-4">
        <position position="26"/>
    </location>
</feature>
<dbReference type="EMBL" id="Z54367">
    <property type="protein sequence ID" value="CAA91196.1"/>
    <property type="molecule type" value="Genomic_DNA"/>
</dbReference>
<dbReference type="EMBL" id="U53204">
    <property type="protein sequence ID" value="AAB05427.1"/>
    <property type="molecule type" value="mRNA"/>
</dbReference>
<dbReference type="EMBL" id="U63610">
    <property type="protein sequence ID" value="AAB05428.1"/>
    <property type="molecule type" value="Genomic_DNA"/>
</dbReference>
<dbReference type="EMBL" id="U63609">
    <property type="protein sequence ID" value="AAB05428.1"/>
    <property type="status" value="JOINED"/>
    <property type="molecule type" value="Genomic_DNA"/>
</dbReference>
<dbReference type="EMBL" id="X97053">
    <property type="protein sequence ID" value="CAA65765.1"/>
    <property type="molecule type" value="mRNA"/>
</dbReference>
<dbReference type="EMBL" id="AY480044">
    <property type="protein sequence ID" value="AAR95677.1"/>
    <property type="molecule type" value="mRNA"/>
</dbReference>
<dbReference type="EMBL" id="AY480045">
    <property type="protein sequence ID" value="AAR95678.1"/>
    <property type="molecule type" value="mRNA"/>
</dbReference>
<dbReference type="EMBL" id="AY480046">
    <property type="protein sequence ID" value="AAR95679.1"/>
    <property type="molecule type" value="mRNA"/>
</dbReference>
<dbReference type="EMBL" id="AY480047">
    <property type="protein sequence ID" value="AAR95680.1"/>
    <property type="molecule type" value="mRNA"/>
</dbReference>
<dbReference type="EMBL" id="AY480048">
    <property type="protein sequence ID" value="AAR95681.1"/>
    <property type="molecule type" value="mRNA"/>
</dbReference>
<dbReference type="EMBL" id="AY480049">
    <property type="protein sequence ID" value="AAR95682.1"/>
    <property type="molecule type" value="mRNA"/>
</dbReference>
<dbReference type="EMBL" id="AY480050">
    <property type="protein sequence ID" value="AAR95683.1"/>
    <property type="molecule type" value="mRNA"/>
</dbReference>
<dbReference type="EMBL" id="AY480051">
    <property type="protein sequence ID" value="AAR95684.1"/>
    <property type="molecule type" value="mRNA"/>
</dbReference>
<dbReference type="EMBL" id="AC109322">
    <property type="status" value="NOT_ANNOTATED_CDS"/>
    <property type="molecule type" value="Genomic_DNA"/>
</dbReference>
<dbReference type="CCDS" id="CCDS43769.1">
    <molecule id="Q15149-2"/>
</dbReference>
<dbReference type="CCDS" id="CCDS43770.1">
    <molecule id="Q15149-9"/>
</dbReference>
<dbReference type="CCDS" id="CCDS43771.1">
    <molecule id="Q15149-8"/>
</dbReference>
<dbReference type="CCDS" id="CCDS43772.1">
    <molecule id="Q15149-1"/>
</dbReference>
<dbReference type="CCDS" id="CCDS43773.1">
    <molecule id="Q15149-5"/>
</dbReference>
<dbReference type="CCDS" id="CCDS43774.1">
    <molecule id="Q15149-6"/>
</dbReference>
<dbReference type="CCDS" id="CCDS43775.1">
    <molecule id="Q15149-4"/>
</dbReference>
<dbReference type="CCDS" id="CCDS47936.1">
    <molecule id="Q15149-7"/>
</dbReference>
<dbReference type="PIR" id="C59404">
    <property type="entry name" value="A59404"/>
</dbReference>
<dbReference type="PIR" id="G02520">
    <property type="entry name" value="G02520"/>
</dbReference>
<dbReference type="RefSeq" id="NP_000436.2">
    <molecule id="Q15149-2"/>
    <property type="nucleotide sequence ID" value="NM_000445.4"/>
</dbReference>
<dbReference type="RefSeq" id="NP_958780.1">
    <molecule id="Q15149-9"/>
    <property type="nucleotide sequence ID" value="NM_201378.4"/>
</dbReference>
<dbReference type="RefSeq" id="NP_958781.1">
    <molecule id="Q15149-8"/>
    <property type="nucleotide sequence ID" value="NM_201379.3"/>
</dbReference>
<dbReference type="RefSeq" id="NP_958782.1">
    <molecule id="Q15149-1"/>
    <property type="nucleotide sequence ID" value="NM_201380.4"/>
</dbReference>
<dbReference type="RefSeq" id="NP_958783.1">
    <molecule id="Q15149-7"/>
    <property type="nucleotide sequence ID" value="NM_201381.3"/>
</dbReference>
<dbReference type="RefSeq" id="NP_958784.1">
    <molecule id="Q15149-5"/>
    <property type="nucleotide sequence ID" value="NM_201382.4"/>
</dbReference>
<dbReference type="RefSeq" id="NP_958785.1">
    <molecule id="Q15149-6"/>
    <property type="nucleotide sequence ID" value="NM_201383.3"/>
</dbReference>
<dbReference type="RefSeq" id="NP_958786.1">
    <molecule id="Q15149-4"/>
    <property type="nucleotide sequence ID" value="NM_201384.3"/>
</dbReference>
<dbReference type="RefSeq" id="XP_047277828.1">
    <molecule id="Q15149-3"/>
    <property type="nucleotide sequence ID" value="XM_047421872.1"/>
</dbReference>
<dbReference type="RefSeq" id="XP_054216641.1">
    <molecule id="Q15149-3"/>
    <property type="nucleotide sequence ID" value="XM_054360666.1"/>
</dbReference>
<dbReference type="PDB" id="1MB8">
    <property type="method" value="X-ray"/>
    <property type="resolution" value="2.15 A"/>
    <property type="chains" value="A=175-403"/>
</dbReference>
<dbReference type="PDB" id="2N03">
    <property type="method" value="NMR"/>
    <property type="chains" value="A=4403-4606"/>
</dbReference>
<dbReference type="PDB" id="2ODU">
    <property type="method" value="X-ray"/>
    <property type="resolution" value="2.30 A"/>
    <property type="chains" value="A=410-640"/>
</dbReference>
<dbReference type="PDB" id="2ODV">
    <property type="method" value="X-ray"/>
    <property type="resolution" value="2.05 A"/>
    <property type="chains" value="A=410-640"/>
</dbReference>
<dbReference type="PDB" id="3F7P">
    <property type="method" value="X-ray"/>
    <property type="resolution" value="2.75 A"/>
    <property type="chains" value="A/B=175-403"/>
</dbReference>
<dbReference type="PDB" id="3PDY">
    <property type="method" value="X-ray"/>
    <property type="resolution" value="2.22 A"/>
    <property type="chains" value="A/B=653-858"/>
</dbReference>
<dbReference type="PDB" id="3PE0">
    <property type="method" value="X-ray"/>
    <property type="resolution" value="2.95 A"/>
    <property type="chains" value="A/B=750-1028"/>
</dbReference>
<dbReference type="PDB" id="4GDO">
    <property type="method" value="X-ray"/>
    <property type="resolution" value="1.70 A"/>
    <property type="chains" value="A/B/C/D/E/F=1492-1530"/>
</dbReference>
<dbReference type="PDB" id="4Q58">
    <property type="method" value="X-ray"/>
    <property type="resolution" value="4.00 A"/>
    <property type="chains" value="A/B=175-400"/>
</dbReference>
<dbReference type="PDB" id="4Q59">
    <property type="method" value="X-ray"/>
    <property type="resolution" value="2.30 A"/>
    <property type="chains" value="A/B=175-400"/>
</dbReference>
<dbReference type="PDB" id="5J1F">
    <property type="method" value="X-ray"/>
    <property type="resolution" value="3.00 A"/>
    <property type="chains" value="A/B=860-928, A/B=999-1116"/>
</dbReference>
<dbReference type="PDB" id="5J1G">
    <property type="method" value="X-ray"/>
    <property type="resolution" value="1.80 A"/>
    <property type="chains" value="A/B=1114-1343"/>
</dbReference>
<dbReference type="PDB" id="5J1H">
    <property type="method" value="X-ray"/>
    <property type="resolution" value="2.80 A"/>
    <property type="chains" value="A/B=860-928, A/B=999-1116"/>
</dbReference>
<dbReference type="PDB" id="5J1I">
    <property type="method" value="X-ray"/>
    <property type="resolution" value="2.80 A"/>
    <property type="chains" value="A/B=1114-1482"/>
</dbReference>
<dbReference type="PDBsum" id="1MB8"/>
<dbReference type="PDBsum" id="2N03"/>
<dbReference type="PDBsum" id="2ODU"/>
<dbReference type="PDBsum" id="2ODV"/>
<dbReference type="PDBsum" id="3F7P"/>
<dbReference type="PDBsum" id="3PDY"/>
<dbReference type="PDBsum" id="3PE0"/>
<dbReference type="PDBsum" id="4GDO"/>
<dbReference type="PDBsum" id="4Q58"/>
<dbReference type="PDBsum" id="4Q59"/>
<dbReference type="PDBsum" id="5J1F"/>
<dbReference type="PDBsum" id="5J1G"/>
<dbReference type="PDBsum" id="5J1H"/>
<dbReference type="PDBsum" id="5J1I"/>
<dbReference type="SASBDB" id="Q15149"/>
<dbReference type="SMR" id="Q15149"/>
<dbReference type="BioGRID" id="111355">
    <property type="interactions" value="432"/>
</dbReference>
<dbReference type="FunCoup" id="Q15149">
    <property type="interactions" value="1042"/>
</dbReference>
<dbReference type="IntAct" id="Q15149">
    <property type="interactions" value="234"/>
</dbReference>
<dbReference type="MINT" id="Q15149"/>
<dbReference type="STRING" id="9606.ENSP00000323856"/>
<dbReference type="BindingDB" id="Q15149"/>
<dbReference type="ChEMBL" id="CHEMBL1293240"/>
<dbReference type="CarbonylDB" id="Q15149"/>
<dbReference type="GlyCosmos" id="Q15149">
    <property type="glycosylation" value="5 sites, 2 glycans"/>
</dbReference>
<dbReference type="GlyGen" id="Q15149">
    <property type="glycosylation" value="11 sites, 5 N-linked glycans (2 sites), 2 O-linked glycans (9 sites)"/>
</dbReference>
<dbReference type="iPTMnet" id="Q15149"/>
<dbReference type="MetOSite" id="Q15149"/>
<dbReference type="PhosphoSitePlus" id="Q15149"/>
<dbReference type="SwissPalm" id="Q15149"/>
<dbReference type="BioMuta" id="PLEC"/>
<dbReference type="DMDM" id="209572726"/>
<dbReference type="CPTAC" id="CPTAC-564"/>
<dbReference type="CPTAC" id="CPTAC-565"/>
<dbReference type="jPOST" id="Q15149"/>
<dbReference type="MassIVE" id="Q15149"/>
<dbReference type="PaxDb" id="9606-ENSP00000323856"/>
<dbReference type="PeptideAtlas" id="Q15149"/>
<dbReference type="PRIDE" id="Q15149"/>
<dbReference type="ProteomicsDB" id="60462">
    <molecule id="Q15149-1"/>
</dbReference>
<dbReference type="ProteomicsDB" id="60463">
    <molecule id="Q15149-2"/>
</dbReference>
<dbReference type="ProteomicsDB" id="60464">
    <molecule id="Q15149-3"/>
</dbReference>
<dbReference type="ProteomicsDB" id="60465">
    <molecule id="Q15149-4"/>
</dbReference>
<dbReference type="ProteomicsDB" id="60466">
    <molecule id="Q15149-5"/>
</dbReference>
<dbReference type="ProteomicsDB" id="60467">
    <molecule id="Q15149-6"/>
</dbReference>
<dbReference type="ProteomicsDB" id="60468">
    <molecule id="Q15149-7"/>
</dbReference>
<dbReference type="ProteomicsDB" id="60469">
    <molecule id="Q15149-8"/>
</dbReference>
<dbReference type="ProteomicsDB" id="60470">
    <molecule id="Q15149-9"/>
</dbReference>
<dbReference type="Pumba" id="Q15149"/>
<dbReference type="Antibodypedia" id="3549">
    <property type="antibodies" value="211 antibodies from 33 providers"/>
</dbReference>
<dbReference type="DNASU" id="5339"/>
<dbReference type="Ensembl" id="ENST00000322810.8">
    <molecule id="Q15149-1"/>
    <property type="protein sequence ID" value="ENSP00000323856.4"/>
    <property type="gene ID" value="ENSG00000178209.17"/>
</dbReference>
<dbReference type="Ensembl" id="ENST00000345136.8">
    <molecule id="Q15149-4"/>
    <property type="protein sequence ID" value="ENSP00000344848.3"/>
    <property type="gene ID" value="ENSG00000178209.17"/>
</dbReference>
<dbReference type="Ensembl" id="ENST00000354589.7">
    <molecule id="Q15149-5"/>
    <property type="protein sequence ID" value="ENSP00000346602.3"/>
    <property type="gene ID" value="ENSG00000178209.17"/>
</dbReference>
<dbReference type="Ensembl" id="ENST00000354958.6">
    <molecule id="Q15149-8"/>
    <property type="protein sequence ID" value="ENSP00000347044.2"/>
    <property type="gene ID" value="ENSG00000178209.17"/>
</dbReference>
<dbReference type="Ensembl" id="ENST00000356346.7">
    <molecule id="Q15149-9"/>
    <property type="protein sequence ID" value="ENSP00000348702.3"/>
    <property type="gene ID" value="ENSG00000178209.17"/>
</dbReference>
<dbReference type="Ensembl" id="ENST00000357649.6">
    <molecule id="Q15149-6"/>
    <property type="protein sequence ID" value="ENSP00000350277.2"/>
    <property type="gene ID" value="ENSG00000178209.17"/>
</dbReference>
<dbReference type="Ensembl" id="ENST00000398774.6">
    <molecule id="Q15149-7"/>
    <property type="protein sequence ID" value="ENSP00000381756.2"/>
    <property type="gene ID" value="ENSG00000178209.17"/>
</dbReference>
<dbReference type="Ensembl" id="ENST00000436759.6">
    <molecule id="Q15149-2"/>
    <property type="protein sequence ID" value="ENSP00000388180.2"/>
    <property type="gene ID" value="ENSG00000178209.17"/>
</dbReference>
<dbReference type="Ensembl" id="ENST00000527096.5">
    <molecule id="Q15149-3"/>
    <property type="protein sequence ID" value="ENSP00000434583.1"/>
    <property type="gene ID" value="ENSG00000178209.17"/>
</dbReference>
<dbReference type="GeneID" id="5339"/>
<dbReference type="KEGG" id="hsa:5339"/>
<dbReference type="MANE-Select" id="ENST00000345136.8">
    <molecule id="Q15149-4"/>
    <property type="protein sequence ID" value="ENSP00000344848.3"/>
    <property type="RefSeq nucleotide sequence ID" value="NM_201384.3"/>
    <property type="RefSeq protein sequence ID" value="NP_958786.1"/>
</dbReference>
<dbReference type="UCSC" id="uc003zab.2">
    <molecule id="Q15149-1"/>
    <property type="organism name" value="human"/>
</dbReference>
<dbReference type="AGR" id="HGNC:9069"/>
<dbReference type="CTD" id="5339"/>
<dbReference type="DisGeNET" id="5339"/>
<dbReference type="GeneCards" id="PLEC"/>
<dbReference type="GeneReviews" id="PLEC"/>
<dbReference type="HGNC" id="HGNC:9069">
    <property type="gene designation" value="PLEC"/>
</dbReference>
<dbReference type="HPA" id="ENSG00000178209">
    <property type="expression patterns" value="Tissue enhanced (skeletal)"/>
</dbReference>
<dbReference type="MalaCards" id="PLEC"/>
<dbReference type="MIM" id="131950">
    <property type="type" value="phenotype"/>
</dbReference>
<dbReference type="MIM" id="226670">
    <property type="type" value="phenotype"/>
</dbReference>
<dbReference type="MIM" id="601282">
    <property type="type" value="gene"/>
</dbReference>
<dbReference type="MIM" id="612138">
    <property type="type" value="phenotype"/>
</dbReference>
<dbReference type="MIM" id="613723">
    <property type="type" value="phenotype"/>
</dbReference>
<dbReference type="MIM" id="616487">
    <property type="type" value="phenotype"/>
</dbReference>
<dbReference type="neXtProt" id="NX_Q15149"/>
<dbReference type="OpenTargets" id="ENSG00000178209"/>
<dbReference type="Orphanet" id="1114">
    <property type="disease" value="Aplasia cutis congenita"/>
</dbReference>
<dbReference type="Orphanet" id="257">
    <property type="disease" value="Epidermolysis bullosa simplex with muscular dystrophy"/>
</dbReference>
<dbReference type="Orphanet" id="158684">
    <property type="disease" value="Epidermolysis bullosa simplex with pyloric atresia"/>
</dbReference>
<dbReference type="Orphanet" id="79401">
    <property type="disease" value="PLEC-related intermediate epidermolysis bullosa simplex without extracutaneous involvement"/>
</dbReference>
<dbReference type="Orphanet" id="254361">
    <property type="disease" value="Plectin-related limb-girdle muscular dystrophy R17"/>
</dbReference>
<dbReference type="PharmGKB" id="PA33399"/>
<dbReference type="VEuPathDB" id="HostDB:ENSG00000178209"/>
<dbReference type="eggNOG" id="KOG0516">
    <property type="taxonomic scope" value="Eukaryota"/>
</dbReference>
<dbReference type="eggNOG" id="KOG3344">
    <property type="taxonomic scope" value="Eukaryota"/>
</dbReference>
<dbReference type="GeneTree" id="ENSGT00940000159045"/>
<dbReference type="HOGENOM" id="CLU_000132_0_0_1"/>
<dbReference type="InParanoid" id="Q15149"/>
<dbReference type="OMA" id="EERWVYR"/>
<dbReference type="OrthoDB" id="8919664at2759"/>
<dbReference type="PAN-GO" id="Q15149">
    <property type="GO annotations" value="12 GO annotations based on evolutionary models"/>
</dbReference>
<dbReference type="PhylomeDB" id="Q15149"/>
<dbReference type="TreeFam" id="TF335163"/>
<dbReference type="PathwayCommons" id="Q15149"/>
<dbReference type="Reactome" id="R-HSA-2022090">
    <property type="pathway name" value="Assembly of collagen fibrils and other multimeric structures"/>
</dbReference>
<dbReference type="Reactome" id="R-HSA-264870">
    <property type="pathway name" value="Caspase-mediated cleavage of cytoskeletal proteins"/>
</dbReference>
<dbReference type="Reactome" id="R-HSA-446107">
    <property type="pathway name" value="Type I hemidesmosome assembly"/>
</dbReference>
<dbReference type="SignaLink" id="Q15149"/>
<dbReference type="SIGNOR" id="Q15149"/>
<dbReference type="BioGRID-ORCS" id="5339">
    <property type="hits" value="41 hits in 1161 CRISPR screens"/>
</dbReference>
<dbReference type="CD-CODE" id="232F8A39">
    <property type="entry name" value="P-body"/>
</dbReference>
<dbReference type="CD-CODE" id="91857CE7">
    <property type="entry name" value="Nucleolus"/>
</dbReference>
<dbReference type="CD-CODE" id="FB4E32DD">
    <property type="entry name" value="Presynaptic clusters and postsynaptic densities"/>
</dbReference>
<dbReference type="ChiTaRS" id="PLEC">
    <property type="organism name" value="human"/>
</dbReference>
<dbReference type="EvolutionaryTrace" id="Q15149"/>
<dbReference type="GeneWiki" id="Plectin"/>
<dbReference type="GenomeRNAi" id="5339"/>
<dbReference type="Pharos" id="Q15149">
    <property type="development level" value="Tbio"/>
</dbReference>
<dbReference type="PRO" id="PR:Q15149"/>
<dbReference type="Proteomes" id="UP000005640">
    <property type="component" value="Chromosome 8"/>
</dbReference>
<dbReference type="RNAct" id="Q15149">
    <property type="molecule type" value="protein"/>
</dbReference>
<dbReference type="Bgee" id="ENSG00000178209">
    <property type="expression patterns" value="Expressed in sural nerve and 200 other cell types or tissues"/>
</dbReference>
<dbReference type="ExpressionAtlas" id="Q15149">
    <property type="expression patterns" value="baseline and differential"/>
</dbReference>
<dbReference type="GO" id="GO:0030424">
    <property type="term" value="C:axon"/>
    <property type="evidence" value="ECO:0007669"/>
    <property type="project" value="Ensembl"/>
</dbReference>
<dbReference type="GO" id="GO:0005903">
    <property type="term" value="C:brush border"/>
    <property type="evidence" value="ECO:0007669"/>
    <property type="project" value="Ensembl"/>
</dbReference>
<dbReference type="GO" id="GO:0043034">
    <property type="term" value="C:costamere"/>
    <property type="evidence" value="ECO:0000304"/>
    <property type="project" value="BHF-UCL"/>
</dbReference>
<dbReference type="GO" id="GO:0005829">
    <property type="term" value="C:cytosol"/>
    <property type="evidence" value="ECO:0000314"/>
    <property type="project" value="HPA"/>
</dbReference>
<dbReference type="GO" id="GO:0030425">
    <property type="term" value="C:dendrite"/>
    <property type="evidence" value="ECO:0007669"/>
    <property type="project" value="Ensembl"/>
</dbReference>
<dbReference type="GO" id="GO:0070062">
    <property type="term" value="C:extracellular exosome"/>
    <property type="evidence" value="ECO:0007005"/>
    <property type="project" value="UniProtKB"/>
</dbReference>
<dbReference type="GO" id="GO:0005925">
    <property type="term" value="C:focal adhesion"/>
    <property type="evidence" value="ECO:0000314"/>
    <property type="project" value="HPA"/>
</dbReference>
<dbReference type="GO" id="GO:0030056">
    <property type="term" value="C:hemidesmosome"/>
    <property type="evidence" value="ECO:0000314"/>
    <property type="project" value="UniProtKB"/>
</dbReference>
<dbReference type="GO" id="GO:0045111">
    <property type="term" value="C:intermediate filament cytoskeleton"/>
    <property type="evidence" value="ECO:0000314"/>
    <property type="project" value="HPA"/>
</dbReference>
<dbReference type="GO" id="GO:0005741">
    <property type="term" value="C:mitochondrial outer membrane"/>
    <property type="evidence" value="ECO:0007669"/>
    <property type="project" value="Ensembl"/>
</dbReference>
<dbReference type="GO" id="GO:0043209">
    <property type="term" value="C:myelin sheath"/>
    <property type="evidence" value="ECO:0007669"/>
    <property type="project" value="Ensembl"/>
</dbReference>
<dbReference type="GO" id="GO:0048471">
    <property type="term" value="C:perinuclear region of cytoplasm"/>
    <property type="evidence" value="ECO:0000318"/>
    <property type="project" value="GO_Central"/>
</dbReference>
<dbReference type="GO" id="GO:0005886">
    <property type="term" value="C:plasma membrane"/>
    <property type="evidence" value="ECO:0000303"/>
    <property type="project" value="ProtInc"/>
</dbReference>
<dbReference type="GO" id="GO:0002102">
    <property type="term" value="C:podosome"/>
    <property type="evidence" value="ECO:0000250"/>
    <property type="project" value="UniProtKB"/>
</dbReference>
<dbReference type="GO" id="GO:0042383">
    <property type="term" value="C:sarcolemma"/>
    <property type="evidence" value="ECO:0000314"/>
    <property type="project" value="UniProtKB"/>
</dbReference>
<dbReference type="GO" id="GO:0016528">
    <property type="term" value="C:sarcoplasm"/>
    <property type="evidence" value="ECO:0000250"/>
    <property type="project" value="BHF-UCL"/>
</dbReference>
<dbReference type="GO" id="GO:0030018">
    <property type="term" value="C:Z disc"/>
    <property type="evidence" value="ECO:0007669"/>
    <property type="project" value="Ensembl"/>
</dbReference>
<dbReference type="GO" id="GO:0051015">
    <property type="term" value="F:actin filament binding"/>
    <property type="evidence" value="ECO:0007669"/>
    <property type="project" value="Ensembl"/>
</dbReference>
<dbReference type="GO" id="GO:0030506">
    <property type="term" value="F:ankyrin binding"/>
    <property type="evidence" value="ECO:0000353"/>
    <property type="project" value="BHF-UCL"/>
</dbReference>
<dbReference type="GO" id="GO:0045296">
    <property type="term" value="F:cadherin binding"/>
    <property type="evidence" value="ECO:0007005"/>
    <property type="project" value="BHF-UCL"/>
</dbReference>
<dbReference type="GO" id="GO:0002162">
    <property type="term" value="F:dystroglycan binding"/>
    <property type="evidence" value="ECO:0007669"/>
    <property type="project" value="Ensembl"/>
</dbReference>
<dbReference type="GO" id="GO:0042802">
    <property type="term" value="F:identical protein binding"/>
    <property type="evidence" value="ECO:0007669"/>
    <property type="project" value="Ensembl"/>
</dbReference>
<dbReference type="GO" id="GO:0003723">
    <property type="term" value="F:RNA binding"/>
    <property type="evidence" value="ECO:0007005"/>
    <property type="project" value="UniProtKB"/>
</dbReference>
<dbReference type="GO" id="GO:0005200">
    <property type="term" value="F:structural constituent of cytoskeleton"/>
    <property type="evidence" value="ECO:0000318"/>
    <property type="project" value="GO_Central"/>
</dbReference>
<dbReference type="GO" id="GO:0008307">
    <property type="term" value="F:structural constituent of muscle"/>
    <property type="evidence" value="ECO:0000315"/>
    <property type="project" value="UniProtKB"/>
</dbReference>
<dbReference type="GO" id="GO:2000689">
    <property type="term" value="P:actomyosin contractile ring assembly actin filament organization"/>
    <property type="evidence" value="ECO:0007669"/>
    <property type="project" value="Ensembl"/>
</dbReference>
<dbReference type="GO" id="GO:0034332">
    <property type="term" value="P:adherens junction organization"/>
    <property type="evidence" value="ECO:0007669"/>
    <property type="project" value="Ensembl"/>
</dbReference>
<dbReference type="GO" id="GO:0055013">
    <property type="term" value="P:cardiac muscle cell development"/>
    <property type="evidence" value="ECO:0007669"/>
    <property type="project" value="Ensembl"/>
</dbReference>
<dbReference type="GO" id="GO:0000902">
    <property type="term" value="P:cell morphogenesis"/>
    <property type="evidence" value="ECO:0007669"/>
    <property type="project" value="Ensembl"/>
</dbReference>
<dbReference type="GO" id="GO:0071498">
    <property type="term" value="P:cellular response to fluid shear stress"/>
    <property type="evidence" value="ECO:0007669"/>
    <property type="project" value="Ensembl"/>
</dbReference>
<dbReference type="GO" id="GO:0071464">
    <property type="term" value="P:cellular response to hydrostatic pressure"/>
    <property type="evidence" value="ECO:0007669"/>
    <property type="project" value="Ensembl"/>
</dbReference>
<dbReference type="GO" id="GO:0071260">
    <property type="term" value="P:cellular response to mechanical stimulus"/>
    <property type="evidence" value="ECO:0007669"/>
    <property type="project" value="Ensembl"/>
</dbReference>
<dbReference type="GO" id="GO:0061436">
    <property type="term" value="P:establishment of skin barrier"/>
    <property type="evidence" value="ECO:0007669"/>
    <property type="project" value="Ensembl"/>
</dbReference>
<dbReference type="GO" id="GO:0010761">
    <property type="term" value="P:fibroblast migration"/>
    <property type="evidence" value="ECO:0007669"/>
    <property type="project" value="Ensembl"/>
</dbReference>
<dbReference type="GO" id="GO:0010467">
    <property type="term" value="P:gene expression"/>
    <property type="evidence" value="ECO:0007669"/>
    <property type="project" value="Ensembl"/>
</dbReference>
<dbReference type="GO" id="GO:0031581">
    <property type="term" value="P:hemidesmosome assembly"/>
    <property type="evidence" value="ECO:0000314"/>
    <property type="project" value="UniProtKB"/>
</dbReference>
<dbReference type="GO" id="GO:0045104">
    <property type="term" value="P:intermediate filament cytoskeleton organization"/>
    <property type="evidence" value="ECO:0000318"/>
    <property type="project" value="GO_Central"/>
</dbReference>
<dbReference type="GO" id="GO:0045109">
    <property type="term" value="P:intermediate filament organization"/>
    <property type="evidence" value="ECO:0007669"/>
    <property type="project" value="Ensembl"/>
</dbReference>
<dbReference type="GO" id="GO:0003334">
    <property type="term" value="P:keratinocyte development"/>
    <property type="evidence" value="ECO:0007669"/>
    <property type="project" value="Ensembl"/>
</dbReference>
<dbReference type="GO" id="GO:0002522">
    <property type="term" value="P:leukocyte migration involved in immune response"/>
    <property type="evidence" value="ECO:0007669"/>
    <property type="project" value="Ensembl"/>
</dbReference>
<dbReference type="GO" id="GO:0007005">
    <property type="term" value="P:mitochondrion organization"/>
    <property type="evidence" value="ECO:0007669"/>
    <property type="project" value="Ensembl"/>
</dbReference>
<dbReference type="GO" id="GO:0035264">
    <property type="term" value="P:multicellular organism growth"/>
    <property type="evidence" value="ECO:0007669"/>
    <property type="project" value="Ensembl"/>
</dbReference>
<dbReference type="GO" id="GO:0045445">
    <property type="term" value="P:myoblast differentiation"/>
    <property type="evidence" value="ECO:0007669"/>
    <property type="project" value="Ensembl"/>
</dbReference>
<dbReference type="GO" id="GO:0006997">
    <property type="term" value="P:nucleus organization"/>
    <property type="evidence" value="ECO:0007669"/>
    <property type="project" value="Ensembl"/>
</dbReference>
<dbReference type="GO" id="GO:0032287">
    <property type="term" value="P:peripheral nervous system myelin maintenance"/>
    <property type="evidence" value="ECO:0007669"/>
    <property type="project" value="Ensembl"/>
</dbReference>
<dbReference type="GO" id="GO:0008104">
    <property type="term" value="P:protein localization"/>
    <property type="evidence" value="ECO:0007669"/>
    <property type="project" value="Ensembl"/>
</dbReference>
<dbReference type="GO" id="GO:0043933">
    <property type="term" value="P:protein-containing complex organization"/>
    <property type="evidence" value="ECO:0007669"/>
    <property type="project" value="Ensembl"/>
</dbReference>
<dbReference type="GO" id="GO:0043114">
    <property type="term" value="P:regulation of vascular permeability"/>
    <property type="evidence" value="ECO:0007669"/>
    <property type="project" value="Ensembl"/>
</dbReference>
<dbReference type="GO" id="GO:0022904">
    <property type="term" value="P:respiratory electron transport chain"/>
    <property type="evidence" value="ECO:0007669"/>
    <property type="project" value="Ensembl"/>
</dbReference>
<dbReference type="GO" id="GO:0032094">
    <property type="term" value="P:response to food"/>
    <property type="evidence" value="ECO:0007669"/>
    <property type="project" value="Ensembl"/>
</dbReference>
<dbReference type="GO" id="GO:0045214">
    <property type="term" value="P:sarcomere organization"/>
    <property type="evidence" value="ECO:0007669"/>
    <property type="project" value="Ensembl"/>
</dbReference>
<dbReference type="GO" id="GO:0048741">
    <property type="term" value="P:skeletal muscle fiber development"/>
    <property type="evidence" value="ECO:0007669"/>
    <property type="project" value="Ensembl"/>
</dbReference>
<dbReference type="GO" id="GO:0014866">
    <property type="term" value="P:skeletal myofibril assembly"/>
    <property type="evidence" value="ECO:0007669"/>
    <property type="project" value="Ensembl"/>
</dbReference>
<dbReference type="GO" id="GO:0010818">
    <property type="term" value="P:T cell chemotaxis"/>
    <property type="evidence" value="ECO:0007669"/>
    <property type="project" value="Ensembl"/>
</dbReference>
<dbReference type="GO" id="GO:0120193">
    <property type="term" value="P:tight junction organization"/>
    <property type="evidence" value="ECO:0007669"/>
    <property type="project" value="Ensembl"/>
</dbReference>
<dbReference type="GO" id="GO:0019226">
    <property type="term" value="P:transmission of nerve impulse"/>
    <property type="evidence" value="ECO:0007669"/>
    <property type="project" value="Ensembl"/>
</dbReference>
<dbReference type="GO" id="GO:0042060">
    <property type="term" value="P:wound healing"/>
    <property type="evidence" value="ECO:0000318"/>
    <property type="project" value="GO_Central"/>
</dbReference>
<dbReference type="CDD" id="cd21188">
    <property type="entry name" value="CH_PLEC-like_rpt1"/>
    <property type="match status" value="1"/>
</dbReference>
<dbReference type="CDD" id="cd21238">
    <property type="entry name" value="CH_PLEC_rpt2"/>
    <property type="match status" value="1"/>
</dbReference>
<dbReference type="CDD" id="cd00176">
    <property type="entry name" value="SPEC"/>
    <property type="match status" value="3"/>
</dbReference>
<dbReference type="FunFam" id="1.20.58.60:FF:000009">
    <property type="entry name" value="dystonin isoform X1"/>
    <property type="match status" value="1"/>
</dbReference>
<dbReference type="FunFam" id="1.10.418.10:FF:000002">
    <property type="entry name" value="Microtubule-actin cross-linking factor 1"/>
    <property type="match status" value="1"/>
</dbReference>
<dbReference type="FunFam" id="1.20.58.60:FF:000036">
    <property type="entry name" value="Plectin a"/>
    <property type="match status" value="1"/>
</dbReference>
<dbReference type="FunFam" id="1.20.58.60:FF:000076">
    <property type="entry name" value="Plectin a"/>
    <property type="match status" value="1"/>
</dbReference>
<dbReference type="FunFam" id="2.30.30.40:FF:000064">
    <property type="entry name" value="Plectin a"/>
    <property type="match status" value="1"/>
</dbReference>
<dbReference type="FunFam" id="3.30.160.780:FF:000001">
    <property type="entry name" value="Plectin a"/>
    <property type="match status" value="1"/>
</dbReference>
<dbReference type="FunFam" id="3.90.1290.10:FF:000001">
    <property type="entry name" value="Plectin a"/>
    <property type="match status" value="5"/>
</dbReference>
<dbReference type="FunFam" id="3.90.1290.10:FF:000002">
    <property type="entry name" value="Plectin a"/>
    <property type="match status" value="1"/>
</dbReference>
<dbReference type="FunFam" id="1.10.10.10:FF:000388">
    <property type="entry name" value="plectin isoform X1"/>
    <property type="match status" value="1"/>
</dbReference>
<dbReference type="FunFam" id="1.20.58.60:FF:000065">
    <property type="entry name" value="plectin isoform X1"/>
    <property type="match status" value="1"/>
</dbReference>
<dbReference type="FunFam" id="1.10.418.10:FF:000029">
    <property type="entry name" value="plectin isoform X2"/>
    <property type="match status" value="1"/>
</dbReference>
<dbReference type="FunFam" id="1.20.58.60:FF:000010">
    <property type="entry name" value="plectin isoform X2"/>
    <property type="match status" value="1"/>
</dbReference>
<dbReference type="Gene3D" id="1.20.58.1060">
    <property type="match status" value="1"/>
</dbReference>
<dbReference type="Gene3D" id="1.20.58.60">
    <property type="match status" value="5"/>
</dbReference>
<dbReference type="Gene3D" id="3.30.160.780">
    <property type="match status" value="1"/>
</dbReference>
<dbReference type="Gene3D" id="1.10.418.10">
    <property type="entry name" value="Calponin-like domain"/>
    <property type="match status" value="2"/>
</dbReference>
<dbReference type="Gene3D" id="3.90.1290.10">
    <property type="entry name" value="Plakin repeat"/>
    <property type="match status" value="6"/>
</dbReference>
<dbReference type="Gene3D" id="2.30.30.40">
    <property type="entry name" value="SH3 Domains"/>
    <property type="match status" value="1"/>
</dbReference>
<dbReference type="Gene3D" id="1.10.10.10">
    <property type="entry name" value="Winged helix-like DNA-binding domain superfamily/Winged helix DNA-binding domain"/>
    <property type="match status" value="1"/>
</dbReference>
<dbReference type="InterPro" id="IPR001589">
    <property type="entry name" value="Actinin_actin-bd_CS"/>
</dbReference>
<dbReference type="InterPro" id="IPR001715">
    <property type="entry name" value="CH_dom"/>
</dbReference>
<dbReference type="InterPro" id="IPR036872">
    <property type="entry name" value="CH_dom_sf"/>
</dbReference>
<dbReference type="InterPro" id="IPR041615">
    <property type="entry name" value="Desmoplakin_SH3"/>
</dbReference>
<dbReference type="InterPro" id="IPR041573">
    <property type="entry name" value="Desmoplakin_Spectrin-like"/>
</dbReference>
<dbReference type="InterPro" id="IPR049538">
    <property type="entry name" value="PCN-like_spectrin-like_rpt"/>
</dbReference>
<dbReference type="InterPro" id="IPR043197">
    <property type="entry name" value="Plakin"/>
</dbReference>
<dbReference type="InterPro" id="IPR035915">
    <property type="entry name" value="Plakin_repeat_sf"/>
</dbReference>
<dbReference type="InterPro" id="IPR005326">
    <property type="entry name" value="Plectin_eS10_N"/>
</dbReference>
<dbReference type="InterPro" id="IPR001101">
    <property type="entry name" value="Plectin_repeat"/>
</dbReference>
<dbReference type="InterPro" id="IPR001452">
    <property type="entry name" value="SH3_domain"/>
</dbReference>
<dbReference type="InterPro" id="IPR018159">
    <property type="entry name" value="Spectrin/alpha-actinin"/>
</dbReference>
<dbReference type="InterPro" id="IPR036388">
    <property type="entry name" value="WH-like_DNA-bd_sf"/>
</dbReference>
<dbReference type="PANTHER" id="PTHR23169">
    <property type="entry name" value="ENVOPLAKIN"/>
    <property type="match status" value="1"/>
</dbReference>
<dbReference type="PANTHER" id="PTHR23169:SF20">
    <property type="entry name" value="PLECTIN"/>
    <property type="match status" value="1"/>
</dbReference>
<dbReference type="Pfam" id="PF00307">
    <property type="entry name" value="CH"/>
    <property type="match status" value="2"/>
</dbReference>
<dbReference type="Pfam" id="PF00681">
    <property type="entry name" value="Plectin"/>
    <property type="match status" value="18"/>
</dbReference>
<dbReference type="Pfam" id="PF03501">
    <property type="entry name" value="S10_plectin"/>
    <property type="match status" value="1"/>
</dbReference>
<dbReference type="Pfam" id="PF17902">
    <property type="entry name" value="SH3_10"/>
    <property type="match status" value="1"/>
</dbReference>
<dbReference type="Pfam" id="PF18373">
    <property type="entry name" value="Spectrin_2"/>
    <property type="match status" value="1"/>
</dbReference>
<dbReference type="Pfam" id="PF21019">
    <property type="entry name" value="Spectrin_3"/>
    <property type="match status" value="1"/>
</dbReference>
<dbReference type="Pfam" id="PF21020">
    <property type="entry name" value="Spectrin_4"/>
    <property type="match status" value="1"/>
</dbReference>
<dbReference type="Pfam" id="PF21097">
    <property type="entry name" value="SR_plectin_7"/>
    <property type="match status" value="1"/>
</dbReference>
<dbReference type="SMART" id="SM00033">
    <property type="entry name" value="CH"/>
    <property type="match status" value="2"/>
</dbReference>
<dbReference type="SMART" id="SM00250">
    <property type="entry name" value="PLEC"/>
    <property type="match status" value="32"/>
</dbReference>
<dbReference type="SMART" id="SM00150">
    <property type="entry name" value="SPEC"/>
    <property type="match status" value="7"/>
</dbReference>
<dbReference type="SUPFAM" id="SSF47576">
    <property type="entry name" value="Calponin-homology domain, CH-domain"/>
    <property type="match status" value="1"/>
</dbReference>
<dbReference type="SUPFAM" id="SSF75399">
    <property type="entry name" value="Plakin repeat"/>
    <property type="match status" value="7"/>
</dbReference>
<dbReference type="SUPFAM" id="SSF46966">
    <property type="entry name" value="Spectrin repeat"/>
    <property type="match status" value="5"/>
</dbReference>
<dbReference type="PROSITE" id="PS00019">
    <property type="entry name" value="ACTININ_1"/>
    <property type="match status" value="1"/>
</dbReference>
<dbReference type="PROSITE" id="PS00020">
    <property type="entry name" value="ACTININ_2"/>
    <property type="match status" value="1"/>
</dbReference>
<dbReference type="PROSITE" id="PS50021">
    <property type="entry name" value="CH"/>
    <property type="match status" value="2"/>
</dbReference>
<dbReference type="PROSITE" id="PS50002">
    <property type="entry name" value="SH3"/>
    <property type="match status" value="1"/>
</dbReference>
<reference key="1">
    <citation type="journal article" date="1996" name="Proc. Natl. Acad. Sci. U.S.A.">
        <title>Human plectin: organization of the gene, sequence analysis, and chromosome localization (8q24).</title>
        <authorList>
            <person name="Liu C.-G."/>
            <person name="Maercker C."/>
            <person name="Castanon M.J."/>
            <person name="Hauptmann R."/>
            <person name="Wiche G."/>
        </authorList>
    </citation>
    <scope>NUCLEOTIDE SEQUENCE [GENOMIC DNA]</scope>
    <source>
        <tissue>Placenta</tissue>
    </source>
</reference>
<reference key="2">
    <citation type="journal article" date="1996" name="Genes Dev.">
        <title>Loss of plectin causes epidermolysis bullosa with muscular dystrophy: cDNA cloning and genomic organization.</title>
        <authorList>
            <person name="McLean W.H.I."/>
            <person name="Pulkkinen L."/>
            <person name="Smith F.J.D."/>
            <person name="Rugg E.L."/>
            <person name="Lane E.B."/>
            <person name="Bullrich F."/>
            <person name="Burgeson R.E."/>
            <person name="Amano S."/>
            <person name="Hudson D.L."/>
            <person name="Owaribe K."/>
            <person name="McGrath J.A."/>
            <person name="McMillan J.R."/>
            <person name="Eady R.A.J."/>
            <person name="Leigh I.M."/>
            <person name="Christiano A.M."/>
            <person name="Uitto J."/>
        </authorList>
    </citation>
    <scope>NUCLEOTIDE SEQUENCE [GENOMIC DNA / MRNA] (ISOFORMS 2 AND 3)</scope>
    <scope>DISEASE</scope>
    <scope>VARIANT VAL-1321</scope>
</reference>
<reference key="3">
    <citation type="journal article" date="2004" name="Genome Res.">
        <title>Multiple variable first exons: a mechanism for cell- and tissue-specific gene regulation.</title>
        <authorList>
            <person name="Zhang T."/>
            <person name="Haws P."/>
            <person name="Wu Q."/>
        </authorList>
    </citation>
    <scope>NUCLEOTIDE SEQUENCE [MRNA] (ISOFORMS 1; 2; 4; 5; 6; 7; 8 AND 9)</scope>
</reference>
<reference key="4">
    <citation type="journal article" date="2006" name="Nature">
        <title>DNA sequence and analysis of human chromosome 8.</title>
        <authorList>
            <person name="Nusbaum C."/>
            <person name="Mikkelsen T.S."/>
            <person name="Zody M.C."/>
            <person name="Asakawa S."/>
            <person name="Taudien S."/>
            <person name="Garber M."/>
            <person name="Kodira C.D."/>
            <person name="Schueler M.G."/>
            <person name="Shimizu A."/>
            <person name="Whittaker C.A."/>
            <person name="Chang J.L."/>
            <person name="Cuomo C.A."/>
            <person name="Dewar K."/>
            <person name="FitzGerald M.G."/>
            <person name="Yang X."/>
            <person name="Allen N.R."/>
            <person name="Anderson S."/>
            <person name="Asakawa T."/>
            <person name="Blechschmidt K."/>
            <person name="Bloom T."/>
            <person name="Borowsky M.L."/>
            <person name="Butler J."/>
            <person name="Cook A."/>
            <person name="Corum B."/>
            <person name="DeArellano K."/>
            <person name="DeCaprio D."/>
            <person name="Dooley K.T."/>
            <person name="Dorris L. III"/>
            <person name="Engels R."/>
            <person name="Gloeckner G."/>
            <person name="Hafez N."/>
            <person name="Hagopian D.S."/>
            <person name="Hall J.L."/>
            <person name="Ishikawa S.K."/>
            <person name="Jaffe D.B."/>
            <person name="Kamat A."/>
            <person name="Kudoh J."/>
            <person name="Lehmann R."/>
            <person name="Lokitsang T."/>
            <person name="Macdonald P."/>
            <person name="Major J.E."/>
            <person name="Matthews C.D."/>
            <person name="Mauceli E."/>
            <person name="Menzel U."/>
            <person name="Mihalev A.H."/>
            <person name="Minoshima S."/>
            <person name="Murayama Y."/>
            <person name="Naylor J.W."/>
            <person name="Nicol R."/>
            <person name="Nguyen C."/>
            <person name="O'Leary S.B."/>
            <person name="O'Neill K."/>
            <person name="Parker S.C.J."/>
            <person name="Polley A."/>
            <person name="Raymond C.K."/>
            <person name="Reichwald K."/>
            <person name="Rodriguez J."/>
            <person name="Sasaki T."/>
            <person name="Schilhabel M."/>
            <person name="Siddiqui R."/>
            <person name="Smith C.L."/>
            <person name="Sneddon T.P."/>
            <person name="Talamas J.A."/>
            <person name="Tenzin P."/>
            <person name="Topham K."/>
            <person name="Venkataraman V."/>
            <person name="Wen G."/>
            <person name="Yamazaki S."/>
            <person name="Young S.K."/>
            <person name="Zeng Q."/>
            <person name="Zimmer A.R."/>
            <person name="Rosenthal A."/>
            <person name="Birren B.W."/>
            <person name="Platzer M."/>
            <person name="Shimizu N."/>
            <person name="Lander E.S."/>
        </authorList>
    </citation>
    <scope>NUCLEOTIDE SEQUENCE [LARGE SCALE GENOMIC DNA]</scope>
</reference>
<reference key="5">
    <citation type="submission" date="2008-12" db="UniProtKB">
        <authorList>
            <person name="Bienvenut W.V."/>
            <person name="Lilla S."/>
            <person name="von Kriegsheim A."/>
            <person name="Lempens A."/>
            <person name="Kolch W."/>
        </authorList>
    </citation>
    <scope>PROTEIN SEQUENCE OF 14-21; 209-227; 237-248; 301-316; 329-336; 350-365; 372-417; 510-517; 588-597; 631-675; 697-706; 714-724; 734-740; 751-764; 857-869; 897-908; 927-934; 1029-1037; 1045-1052; 1076-1088; 1131-1139; 1166-1175; 1187-1210; 1216-1224; 1227-1243; 1251-1266; 1274-1291; 1318-1335; 1338-1344; 1351-1364; 1366-1382; 1411-1438; 1473-1479; 1499-1508; 1554-1563; 1596-1603; 1606-1616; 1628-1638; 1649-1657; 1671-1679; 1699-1709; 1732-1744; 1783-1792; 1825-1833; 1846-1854; 1867-1875; 1888-1908; 1976-1994; 2006-2014; 2048-2055; 2058-2068; 2079-2087; 2098-2108; 2130-2139; 2142-2150; 2172-2182; 2199-2217; 2310-2316; 2319-2329; 2340-2348; 2361-2379; 2402-2409; 2420-2429; 2432-2442; 2462-2473; 2483-2503; 2512-2521; 2565-2575; 2587-2594; 2651-2663; 2685-2693; 2705-2761; 2768-2787; 2795-2821; 2833-2841; 2847-2881; 2885-2903; 2942-2968; 2979-3007; 3028-3039; 3045-3053; 3095-3106; 3109-3127; 3132-3139; 3146-3154; 3175-3183; 3213-3231; 3244-3259; 3270-3285; 3289-3297; 3317-3335; 3356-3368; 3374-3384; 3424-3436; 3447-3469; 3477-3485; 3506-3513; 3519-3540; 3544-3568; 3601-3637; 3648-3661; 3667-3676; 3686-3702; 3739-3749; 3771-3781; 3784-3804; 3839-3878; 3887-3897; 3926-3963; 3969-3999; 4004-4018; 4027-4060; 4084-4091; 4122-4138; 4159-4167; 4179-4205; 4278-4296; 4339-4348; 4354-4360; 4384-4401; 4429-4447; 4467-4475; 4492-4500; 4543-4551; 4590-4627 AND 4668-4684</scope>
    <scope>PHOSPHORYLATION AT SER-4385</scope>
    <scope>IDENTIFICATION BY MASS SPECTROMETRY</scope>
    <source>
        <tissue>Ovarian carcinoma</tissue>
    </source>
</reference>
<reference key="6">
    <citation type="journal article" date="2003" name="J. Cell Sci.">
        <title>Analysis of the interactions between BP180, BP230, plectin and the integrin alpha6beta4 important for hemidesmosome assembly.</title>
        <authorList>
            <person name="Koster J."/>
            <person name="Geerts D."/>
            <person name="Favre B."/>
            <person name="Borradori L."/>
            <person name="Sonnenberg A."/>
        </authorList>
    </citation>
    <scope>FUNCTION</scope>
    <scope>INTERACTION WITH COL17A1</scope>
    <scope>SUBCELLULAR LOCATION</scope>
</reference>
<reference key="7">
    <citation type="journal article" date="2006" name="Cell">
        <title>Global, in vivo, and site-specific phosphorylation dynamics in signaling networks.</title>
        <authorList>
            <person name="Olsen J.V."/>
            <person name="Blagoev B."/>
            <person name="Gnad F."/>
            <person name="Macek B."/>
            <person name="Kumar C."/>
            <person name="Mortensen P."/>
            <person name="Mann M."/>
        </authorList>
    </citation>
    <scope>PHOSPHORYLATION [LARGE SCALE ANALYSIS] AT SER-125; SER-149; SER-720; SER-1435; SER-1721; THR-4030 AND THR-4411</scope>
    <scope>IDENTIFICATION BY MASS SPECTROMETRY [LARGE SCALE ANALYSIS]</scope>
    <source>
        <tissue>Cervix carcinoma</tissue>
    </source>
</reference>
<reference key="8">
    <citation type="journal article" date="2007" name="Science">
        <title>ATM and ATR substrate analysis reveals extensive protein networks responsive to DNA damage.</title>
        <authorList>
            <person name="Matsuoka S."/>
            <person name="Ballif B.A."/>
            <person name="Smogorzewska A."/>
            <person name="McDonald E.R. III"/>
            <person name="Hurov K.E."/>
            <person name="Luo J."/>
            <person name="Bakalarski C.E."/>
            <person name="Zhao Z."/>
            <person name="Solimini N."/>
            <person name="Lerenthal Y."/>
            <person name="Shiloh Y."/>
            <person name="Gygi S.P."/>
            <person name="Elledge S.J."/>
        </authorList>
    </citation>
    <scope>IDENTIFICATION BY MASS SPECTROMETRY [LARGE SCALE ANALYSIS]</scope>
    <source>
        <tissue>Embryonic kidney</tissue>
    </source>
</reference>
<reference key="9">
    <citation type="journal article" date="2008" name="J. Cell Sci.">
        <title>TorsinA binds the KASH domain of nesprins and participates in linkage between nuclear envelope and cytoskeleton.</title>
        <authorList>
            <person name="Nery F.C."/>
            <person name="Zeng J."/>
            <person name="Niland B.P."/>
            <person name="Hewett J."/>
            <person name="Farley J."/>
            <person name="Irimia D."/>
            <person name="Li Y."/>
            <person name="Wiche G."/>
            <person name="Sonnenberg A."/>
            <person name="Breakefield X.O."/>
        </authorList>
    </citation>
    <scope>INTERACTION WITH TOR1A</scope>
</reference>
<reference key="10">
    <citation type="journal article" date="2008" name="J. Proteome Res.">
        <title>Combining protein-based IMAC, peptide-based IMAC, and MudPIT for efficient phosphoproteomic analysis.</title>
        <authorList>
            <person name="Cantin G.T."/>
            <person name="Yi W."/>
            <person name="Lu B."/>
            <person name="Park S.K."/>
            <person name="Xu T."/>
            <person name="Lee J.-D."/>
            <person name="Yates J.R. III"/>
        </authorList>
    </citation>
    <scope>IDENTIFICATION BY MASS SPECTROMETRY [LARGE SCALE ANALYSIS]</scope>
    <source>
        <tissue>Cervix carcinoma</tissue>
    </source>
</reference>
<reference key="11">
    <citation type="journal article" date="2008" name="J. Proteome Res.">
        <title>Phosphorylation analysis of primary human T lymphocytes using sequential IMAC and titanium oxide enrichment.</title>
        <authorList>
            <person name="Carrascal M."/>
            <person name="Ovelleiro D."/>
            <person name="Casas V."/>
            <person name="Gay M."/>
            <person name="Abian J."/>
        </authorList>
    </citation>
    <scope>IDENTIFICATION BY MASS SPECTROMETRY [LARGE SCALE ANALYSIS]</scope>
    <source>
        <tissue>T-cell</tissue>
    </source>
</reference>
<reference key="12">
    <citation type="journal article" date="2008" name="Mol. Cell">
        <title>Kinase-selective enrichment enables quantitative phosphoproteomics of the kinome across the cell cycle.</title>
        <authorList>
            <person name="Daub H."/>
            <person name="Olsen J.V."/>
            <person name="Bairlein M."/>
            <person name="Gnad F."/>
            <person name="Oppermann F.S."/>
            <person name="Korner R."/>
            <person name="Greff Z."/>
            <person name="Keri G."/>
            <person name="Stemmann O."/>
            <person name="Mann M."/>
        </authorList>
    </citation>
    <scope>PHOSPHORYLATION [LARGE SCALE ANALYSIS] AT SER-1435</scope>
    <scope>IDENTIFICATION BY MASS SPECTROMETRY [LARGE SCALE ANALYSIS]</scope>
    <source>
        <tissue>Cervix carcinoma</tissue>
    </source>
</reference>
<reference key="13">
    <citation type="journal article" date="2008" name="Proc. Natl. Acad. Sci. U.S.A.">
        <title>A quantitative atlas of mitotic phosphorylation.</title>
        <authorList>
            <person name="Dephoure N."/>
            <person name="Zhou C."/>
            <person name="Villen J."/>
            <person name="Beausoleil S.A."/>
            <person name="Bakalarski C.E."/>
            <person name="Elledge S.J."/>
            <person name="Gygi S.P."/>
        </authorList>
    </citation>
    <scope>PHOSPHORYLATION [LARGE SCALE ANALYSIS] AT SER-125; SER-149; SER-720; SER-4382; SER-4385; SER-4386; SER-4389; SER-4390; SER-4391; SER-4392; SER-4396; SER-4613; SER-4622; SER-4626 AND SER-4642</scope>
    <scope>PHOSPHORYLATION [LARGE SCALE ANALYSIS] AT SER-42 (ISOFORMS 2 AND 3)</scope>
    <scope>PHOSPHORYLATION [LARGE SCALE ANALYSIS] AT SER-21 (ISOFORM 4)</scope>
    <scope>IDENTIFICATION BY MASS SPECTROMETRY [LARGE SCALE ANALYSIS]</scope>
    <source>
        <tissue>Cervix carcinoma</tissue>
    </source>
</reference>
<reference key="14">
    <citation type="journal article" date="2009" name="Anal. Chem.">
        <title>Lys-N and trypsin cover complementary parts of the phosphoproteome in a refined SCX-based approach.</title>
        <authorList>
            <person name="Gauci S."/>
            <person name="Helbig A.O."/>
            <person name="Slijper M."/>
            <person name="Krijgsveld J."/>
            <person name="Heck A.J."/>
            <person name="Mohammed S."/>
        </authorList>
    </citation>
    <scope>IDENTIFICATION BY MASS SPECTROMETRY [LARGE SCALE ANALYSIS]</scope>
</reference>
<reference key="15">
    <citation type="journal article" date="2009" name="Mol. Cell. Proteomics">
        <title>Large-scale proteomics analysis of the human kinome.</title>
        <authorList>
            <person name="Oppermann F.S."/>
            <person name="Gnad F."/>
            <person name="Olsen J.V."/>
            <person name="Hornberger R."/>
            <person name="Greff Z."/>
            <person name="Keri G."/>
            <person name="Mann M."/>
            <person name="Daub H."/>
        </authorList>
    </citation>
    <scope>PHOSPHORYLATION [LARGE SCALE ANALYSIS] AT SER-720; THR-4030 AND SER-4626</scope>
    <scope>IDENTIFICATION BY MASS SPECTROMETRY [LARGE SCALE ANALYSIS]</scope>
</reference>
<reference key="16">
    <citation type="journal article" date="2009" name="Sci. Signal.">
        <title>Quantitative phosphoproteomic analysis of T cell receptor signaling reveals system-wide modulation of protein-protein interactions.</title>
        <authorList>
            <person name="Mayya V."/>
            <person name="Lundgren D.H."/>
            <person name="Hwang S.-I."/>
            <person name="Rezaul K."/>
            <person name="Wu L."/>
            <person name="Eng J.K."/>
            <person name="Rodionov V."/>
            <person name="Han D.K."/>
        </authorList>
    </citation>
    <scope>PHOSPHORYLATION [LARGE SCALE ANALYSIS] AT SER-4386; SER-4389; SER-4396; SER-4613; SER-4618 AND SER-4626</scope>
    <scope>PHOSPHORYLATION [LARGE SCALE ANALYSIS] AT SER-42 (ISOFORMS 2 AND 3)</scope>
    <scope>IDENTIFICATION BY MASS SPECTROMETRY [LARGE SCALE ANALYSIS]</scope>
    <source>
        <tissue>Leukemic T-cell</tissue>
    </source>
</reference>
<reference key="17">
    <citation type="journal article" date="2009" name="Science">
        <title>Lysine acetylation targets protein complexes and co-regulates major cellular functions.</title>
        <authorList>
            <person name="Choudhary C."/>
            <person name="Kumar C."/>
            <person name="Gnad F."/>
            <person name="Nielsen M.L."/>
            <person name="Rehman M."/>
            <person name="Walther T.C."/>
            <person name="Olsen J.V."/>
            <person name="Mann M."/>
        </authorList>
    </citation>
    <scope>ACETYLATION [LARGE SCALE ANALYSIS] AT LYS-3091 AND LYS-3420</scope>
    <scope>IDENTIFICATION BY MASS SPECTROMETRY [LARGE SCALE ANALYSIS]</scope>
</reference>
<reference key="18">
    <citation type="journal article" date="2010" name="Am. J. Hum. Genet.">
        <title>Mutation in exon 1f of PLEC, leading to disruption of plectin isoform 1f, causes autosomal-recessive limb-girdle muscular dystrophy.</title>
        <authorList>
            <person name="Gundesli H."/>
            <person name="Talim B."/>
            <person name="Korkusuz P."/>
            <person name="Balci-Hayta B."/>
            <person name="Cirak S."/>
            <person name="Akarsu N.A."/>
            <person name="Topaloglu H."/>
            <person name="Dincer P."/>
        </authorList>
    </citation>
    <scope>FUNCTION OF ISOFORM 9</scope>
    <scope>INVOLVEMENT IN LGMDR17</scope>
</reference>
<reference key="19">
    <citation type="journal article" date="2010" name="Exp. Cell Res.">
        <title>BPAG1 isoform-b: complex distribution pattern in striated and heart muscle and association with plectin and alpha-actinin.</title>
        <authorList>
            <person name="Steiner-Champliaud M.F."/>
            <person name="Schneider Y."/>
            <person name="Favre B."/>
            <person name="Paulhe F."/>
            <person name="Praetzel-Wunder S."/>
            <person name="Faulkner G."/>
            <person name="Konieczny P."/>
            <person name="Raith M."/>
            <person name="Wiche G."/>
            <person name="Adebola A."/>
            <person name="Liem R.K."/>
            <person name="Langbein L."/>
            <person name="Sonnenberg A."/>
            <person name="Fontao L."/>
            <person name="Borradori L."/>
        </authorList>
    </citation>
    <scope>INTERACTION WITH DST</scope>
</reference>
<reference key="20">
    <citation type="journal article" date="2010" name="Hum. Mutat.">
        <title>Plectin deficiency leads to both muscular dystrophy and pyloric atresia in epidermolysis bullosa simplex.</title>
        <authorList>
            <person name="Natsuga K."/>
            <person name="Nishie W."/>
            <person name="Shinkuma S."/>
            <person name="Arita K."/>
            <person name="Nakamura H."/>
            <person name="Ohyama M."/>
            <person name="Osaka H."/>
            <person name="Kambara T."/>
            <person name="Hirako Y."/>
            <person name="Shimizu H."/>
        </authorList>
    </citation>
    <scope>INVOLVEMENT IN EBS5B AND EBS5C</scope>
</reference>
<reference key="21">
    <citation type="journal article" date="2010" name="Sci. Signal.">
        <title>Quantitative phosphoproteomics reveals widespread full phosphorylation site occupancy during mitosis.</title>
        <authorList>
            <person name="Olsen J.V."/>
            <person name="Vermeulen M."/>
            <person name="Santamaria A."/>
            <person name="Kumar C."/>
            <person name="Miller M.L."/>
            <person name="Jensen L.J."/>
            <person name="Gnad F."/>
            <person name="Cox J."/>
            <person name="Jensen T.S."/>
            <person name="Nigg E.A."/>
            <person name="Brunak S."/>
            <person name="Mann M."/>
        </authorList>
    </citation>
    <scope>PHOSPHORYLATION [LARGE SCALE ANALYSIS] AT THR-113; SER-125; SER-149; SER-720; SER-1435; SER-1732; THR-4030; SER-4382; SER-4396; SER-4400; SER-4613; SER-4622 AND SER-4642</scope>
    <scope>PHOSPHORYLATION [LARGE SCALE ANALYSIS] AT SER-42 (ISOFORMS 2 AND 3)</scope>
    <scope>PHOSPHORYLATION [LARGE SCALE ANALYSIS] AT SER-20 AND SER-21 (ISOFORM 4)</scope>
    <scope>IDENTIFICATION BY MASS SPECTROMETRY [LARGE SCALE ANALYSIS]</scope>
    <source>
        <tissue>Cervix carcinoma</tissue>
    </source>
</reference>
<reference key="22">
    <citation type="journal article" date="2011" name="BMC Syst. Biol.">
        <title>Initial characterization of the human central proteome.</title>
        <authorList>
            <person name="Burkard T.R."/>
            <person name="Planyavsky M."/>
            <person name="Kaupe I."/>
            <person name="Breitwieser F.P."/>
            <person name="Buerckstuemmer T."/>
            <person name="Bennett K.L."/>
            <person name="Superti-Furga G."/>
            <person name="Colinge J."/>
        </authorList>
    </citation>
    <scope>IDENTIFICATION BY MASS SPECTROMETRY [LARGE SCALE ANALYSIS]</scope>
</reference>
<reference key="23">
    <citation type="journal article" date="2011" name="Exp. Cell Res.">
        <title>Novel interactions of ankyrins-G at the costameres: the muscle-specific Obscurin/Titin-Binding-related Domain (OTBD) binds plectin and filamin C.</title>
        <authorList>
            <person name="Maiweilidan Y."/>
            <person name="Klauza I."/>
            <person name="Kordeli E."/>
        </authorList>
    </citation>
    <scope>INTERACTION WITH ANK3</scope>
</reference>
<reference key="24">
    <citation type="journal article" date="2011" name="Neurology">
        <title>Myasthenic syndrome caused by plectinopathy.</title>
        <authorList>
            <person name="Selcen D."/>
            <person name="Juel V.C."/>
            <person name="Hobson-Webb L.D."/>
            <person name="Smith E.C."/>
            <person name="Stickler D.E."/>
            <person name="Bite A.V."/>
            <person name="Ohno K."/>
            <person name="Engel A.G."/>
        </authorList>
    </citation>
    <scope>INVOLVEMENT IN EBS5B</scope>
</reference>
<reference key="25">
    <citation type="journal article" date="2011" name="Sci. Signal.">
        <title>System-wide temporal characterization of the proteome and phosphoproteome of human embryonic stem cell differentiation.</title>
        <authorList>
            <person name="Rigbolt K.T."/>
            <person name="Prokhorova T.A."/>
            <person name="Akimov V."/>
            <person name="Henningsen J."/>
            <person name="Johansen P.T."/>
            <person name="Kratchmarova I."/>
            <person name="Kassem M."/>
            <person name="Mann M."/>
            <person name="Olsen J.V."/>
            <person name="Blagoev B."/>
        </authorList>
    </citation>
    <scope>PHOSPHORYLATION [LARGE SCALE ANALYSIS] AT SER-1435</scope>
    <scope>IDENTIFICATION BY MASS SPECTROMETRY [LARGE SCALE ANALYSIS]</scope>
</reference>
<reference key="26">
    <citation type="journal article" date="2013" name="J. Proteome Res.">
        <title>Toward a comprehensive characterization of a human cancer cell phosphoproteome.</title>
        <authorList>
            <person name="Zhou H."/>
            <person name="Di Palma S."/>
            <person name="Preisinger C."/>
            <person name="Peng M."/>
            <person name="Polat A.N."/>
            <person name="Heck A.J."/>
            <person name="Mohammed S."/>
        </authorList>
    </citation>
    <scope>PHOSPHORYLATION [LARGE SCALE ANALYSIS] AT SER-125; SER-149; SER-720; SER-1435; SER-1732; SER-2782; THR-4030; SER-4385; SER-4386; SER-4389; SER-4396; SER-4400; SER-4607; SER-4613; SER-4618; SER-4622; SER-4626; SER-4672 AND SER-4675</scope>
    <scope>IDENTIFICATION BY MASS SPECTROMETRY [LARGE SCALE ANALYSIS]</scope>
    <source>
        <tissue>Cervix carcinoma</tissue>
        <tissue>Erythroleukemia</tissue>
    </source>
</reference>
<reference key="27">
    <citation type="journal article" date="2014" name="J. Invest. Dermatol.">
        <title>Interaction of plectin with keratins 5 and 14: dependence on several plectin domains and keratin quaternary structure.</title>
        <authorList>
            <person name="Bouameur J.E."/>
            <person name="Favre B."/>
            <person name="Fontao L."/>
            <person name="Lingasamy P."/>
            <person name="Begre N."/>
            <person name="Borradori L."/>
        </authorList>
    </citation>
    <scope>INTERACTION WITH KRT1; KRT5; KRT8; KRT10; KRT14; KRT15; KRT18; DES AND VIM</scope>
</reference>
<reference key="28">
    <citation type="journal article" date="2014" name="J. Proteomics">
        <title>An enzyme assisted RP-RPLC approach for in-depth analysis of human liver phosphoproteome.</title>
        <authorList>
            <person name="Bian Y."/>
            <person name="Song C."/>
            <person name="Cheng K."/>
            <person name="Dong M."/>
            <person name="Wang F."/>
            <person name="Huang J."/>
            <person name="Sun D."/>
            <person name="Wang L."/>
            <person name="Ye M."/>
            <person name="Zou H."/>
        </authorList>
    </citation>
    <scope>PHOSPHORYLATION [LARGE SCALE ANALYSIS] AT SER-720; SER-1047; SER-1435; SER-2631; SER-2782; SER-2802; THR-2886; SER-3036; THR-3785; THR-4030; SER-4054; SER-4386; SER-4390; SER-4392; TYR-4393; SER-4396; SER-4400; SER-4616; SER-4626 AND SER-4675</scope>
    <scope>IDENTIFICATION BY MASS SPECTROMETRY [LARGE SCALE ANALYSIS]</scope>
    <source>
        <tissue>Liver</tissue>
    </source>
</reference>
<reference key="29">
    <citation type="journal article" date="2014" name="Mol. Cell. Proteomics">
        <title>Immunoaffinity enrichment and mass spectrometry analysis of protein methylation.</title>
        <authorList>
            <person name="Guo A."/>
            <person name="Gu H."/>
            <person name="Zhou J."/>
            <person name="Mulhern D."/>
            <person name="Wang Y."/>
            <person name="Lee K.A."/>
            <person name="Yang V."/>
            <person name="Aguiar M."/>
            <person name="Kornhauser J."/>
            <person name="Jia X."/>
            <person name="Ren J."/>
            <person name="Beausoleil S.A."/>
            <person name="Silva J.C."/>
            <person name="Vemulapalli V."/>
            <person name="Bedford M.T."/>
            <person name="Comb M.J."/>
        </authorList>
    </citation>
    <scope>METHYLATION [LARGE SCALE ANALYSIS] AT ARG-4640</scope>
    <scope>IDENTIFICATION BY MASS SPECTROMETRY [LARGE SCALE ANALYSIS]</scope>
    <source>
        <tissue>Colon carcinoma</tissue>
    </source>
</reference>
<reference key="30">
    <citation type="journal article" date="2015" name="Proteomics">
        <title>N-terminome analysis of the human mitochondrial proteome.</title>
        <authorList>
            <person name="Vaca Jacome A.S."/>
            <person name="Rabilloud T."/>
            <person name="Schaeffer-Reiss C."/>
            <person name="Rompais M."/>
            <person name="Ayoub D."/>
            <person name="Lane L."/>
            <person name="Bairoch A."/>
            <person name="Van Dorsselaer A."/>
            <person name="Carapito C."/>
        </authorList>
    </citation>
    <scope>IDENTIFICATION BY MASS SPECTROMETRY [LARGE SCALE ANALYSIS]</scope>
</reference>
<reference key="31">
    <citation type="journal article" date="2007" name="J. Mol. Biol.">
        <title>The structure of a tandem pair of spectrin repeats of plectin reveals a modular organization of the plakin domain.</title>
        <authorList>
            <person name="Sonnenberg A."/>
            <person name="Rojas A.M."/>
            <person name="de Pereda J.M."/>
        </authorList>
    </citation>
    <scope>X-RAY CRYSTALLOGRAPHY (2.05 ANGSTROMS) OF 409-640</scope>
</reference>
<reference key="32">
    <citation type="journal article" date="2003" name="Structure">
        <title>Structural and functional analysis of the actin binding domain of plectin suggests alternative mechanisms for binding to F-actin and integrin beta4.</title>
        <authorList>
            <person name="Garcia-Alvarez B."/>
            <person name="Bobkov A."/>
            <person name="Sonnenberg A."/>
            <person name="de Pereda J.M."/>
        </authorList>
    </citation>
    <scope>X-RAY CRYSTALLOGRAPHY (2.15 ANGSTROMS) OF 159-403</scope>
</reference>
<reference key="33">
    <citation type="journal article" date="1996" name="Hum. Mol. Genet.">
        <title>Homozygous deletion mutations in the plectin gene (PLEC1) in patients with epidermolysis bullosa simplex associated with late-onset muscular dystrophy.</title>
        <authorList>
            <person name="Pulkkinen L."/>
            <person name="Smith F.J.D."/>
            <person name="Shimizu H."/>
            <person name="Murata S."/>
            <person name="Yaoita H."/>
            <person name="Hachisuka H."/>
            <person name="Nishikawa T."/>
            <person name="McLean W.H.I."/>
            <person name="Uitto J."/>
        </authorList>
    </citation>
    <scope>VARIANT EBS5B 1003-GLN--ALA-1005 DEL</scope>
</reference>
<reference key="34">
    <citation type="journal article" date="2001" name="Am. J. Pathol.">
        <title>A compound heterozygous one amino-acid insertion/nonsense mutation in the plectin gene causes epidermolysis bullosa simplex with plectin deficiency.</title>
        <authorList>
            <person name="Bauer J.W."/>
            <person name="Rouan F."/>
            <person name="Kofler B."/>
            <person name="Rezniczek G.A."/>
            <person name="Kornacker I."/>
            <person name="Muss W."/>
            <person name="Hametner R."/>
            <person name="Klausegger A."/>
            <person name="Huber A."/>
            <person name="Pohla-Gubo G."/>
            <person name="Wiche G."/>
            <person name="Uitto J."/>
            <person name="Hintner H."/>
        </authorList>
    </citation>
    <scope>VARIANT EBS5B LEU-429 INS</scope>
</reference>
<reference key="35">
    <citation type="journal article" date="2002" name="J. Invest. Dermatol.">
        <title>A site-specific plectin mutation causes dominant epidermolysis bullosa simplex Ogna: two identical de novo mutations.</title>
        <authorList>
            <person name="Koss-Harnes D."/>
            <person name="Hoeyheim B."/>
            <person name="Anton-Lamprecht I."/>
            <person name="Gjesti A."/>
            <person name="Joergensen R.S."/>
            <person name="Jahnsen F.L."/>
            <person name="Olaisen B."/>
            <person name="Wiche G."/>
            <person name="Gedde-Dahl T. Jr."/>
        </authorList>
    </citation>
    <scope>VARIANT EBS5A TRP-2110</scope>
</reference>
<reference key="36">
    <citation type="journal article" date="2003" name="J. Invest. Dermatol.">
        <title>Identification of a lethal form of epidermolysis bullosa simplex associated with a homozygous genetic mutation in plectin.</title>
        <authorList>
            <person name="Charlesworth A."/>
            <person name="Gagnoux-Palacios L."/>
            <person name="Bonduelle M."/>
            <person name="Ortonne J.-P."/>
            <person name="De Raeve L."/>
            <person name="Meneguzzi G."/>
        </authorList>
    </citation>
    <scope>INVOLVEMENT IN EBS5C</scope>
</reference>
<reference key="37">
    <citation type="journal article" date="2015" name="Hum. Mol. Genet.">
        <title>Mutation in exon 1a of PLEC, leading to disruption of plectin isoform 1a, causes autosomal-recessive skin-only epidermolysis bullosa simplex.</title>
        <authorList>
            <person name="Gostynska K.B."/>
            <person name="Nijenhuis M."/>
            <person name="Lemmink H."/>
            <person name="Pas H.H."/>
            <person name="Pasmooij A.M."/>
            <person name="Lang K.K."/>
            <person name="Castanon M.J."/>
            <person name="Wiche G."/>
            <person name="Jonkman M.F."/>
        </authorList>
    </citation>
    <scope>INVOLVEMENT IN EBS5D</scope>
</reference>
<reference key="38">
    <citation type="journal article" date="2015" name="Am. J. Hum. Genet.">
        <title>Joubert Syndrome in French Canadians and Identification of Mutations in CEP104.</title>
        <authorList>
            <consortium name="Care4Rare Canada Consortium"/>
            <person name="Srour M."/>
            <person name="Hamdan F.F."/>
            <person name="McKnight D."/>
            <person name="Davis E."/>
            <person name="Mandel H."/>
            <person name="Schwartzentruber J."/>
            <person name="Martin B."/>
            <person name="Patry L."/>
            <person name="Nassif C."/>
            <person name="Dionne-Laporte A."/>
            <person name="Ospina L.H."/>
            <person name="Lemyre E."/>
            <person name="Massicotte C."/>
            <person name="Laframboise R."/>
            <person name="Maranda B."/>
            <person name="Labuda D."/>
            <person name="Decarie J.C."/>
            <person name="Rypens F."/>
            <person name="Goldsher D."/>
            <person name="Fallet-Bianco C."/>
            <person name="Soucy J.F."/>
            <person name="Laberge A.M."/>
            <person name="Maftei C."/>
            <person name="Boycott K."/>
            <person name="Brais B."/>
            <person name="Boucher R.M."/>
            <person name="Rouleau G.A."/>
            <person name="Katsanis N."/>
            <person name="Majewski J."/>
            <person name="Elpeleg O."/>
            <person name="Kukolich M.K."/>
            <person name="Shalev S."/>
            <person name="Michaud J.L."/>
        </authorList>
    </citation>
    <scope>VARIANT HIS-102</scope>
</reference>
<reference key="39">
    <citation type="journal article" date="2015" name="Arch. Iran. Med.">
        <title>Report of a patient with limb-girdle muscular dystrophy, ptosis and ophthalmoparesis caused by plectinopathy.</title>
        <authorList>
            <person name="Fattahi Z."/>
            <person name="Kahrizi K."/>
            <person name="Nafissi S."/>
            <person name="Fadaee M."/>
            <person name="Abedini S.S."/>
            <person name="Kariminejad A."/>
            <person name="Akbari M.R."/>
            <person name="Najmabadi H."/>
        </authorList>
    </citation>
    <scope>VARIANT TRP-2005</scope>
    <scope>VARIANT LGMDR17 SER-3945</scope>
</reference>
<reference key="40">
    <citation type="journal article" date="2017" name="Clin. Genet.">
        <title>Improved diagnostic yield of neuromuscular disorders applying clinical exome sequencing in patients arising from a consanguineous population.</title>
        <authorList>
            <person name="Fattahi Z."/>
            <person name="Kalhor Z."/>
            <person name="Fadaee M."/>
            <person name="Vazehan R."/>
            <person name="Parsimehr E."/>
            <person name="Abolhassani A."/>
            <person name="Beheshtian M."/>
            <person name="Zamani G."/>
            <person name="Nafissi S."/>
            <person name="Nilipour Y."/>
            <person name="Akbari M.R."/>
            <person name="Kahrizi K."/>
            <person name="Kariminejad A."/>
            <person name="Najmabadi H."/>
        </authorList>
    </citation>
    <scope>VARIANT LGMDR17 SER-3945</scope>
</reference>
<protein>
    <recommendedName>
        <fullName>Plectin</fullName>
        <shortName>PCN</shortName>
        <shortName>PLTN</shortName>
    </recommendedName>
    <alternativeName>
        <fullName>Hemidesmosomal protein 1</fullName>
        <shortName>HD1</shortName>
    </alternativeName>
    <alternativeName>
        <fullName>Plectin-1</fullName>
    </alternativeName>
</protein>